<protein>
    <recommendedName>
        <fullName evidence="55">NAD-dependent protein deacylase sirtuin-6</fullName>
        <ecNumber evidence="16 22 32 38">2.3.1.-</ecNumber>
    </recommendedName>
    <alternativeName>
        <fullName evidence="55">NAD-dependent protein deacetylase sirtuin-6</fullName>
        <ecNumber evidence="2 7 18 22 30 32">2.3.1.286</ecNumber>
    </alternativeName>
    <alternativeName>
        <fullName evidence="55">Protein mono-ADP-ribosyltransferase sirtuin-6</fullName>
        <ecNumber evidence="11 32 33">2.4.2.-</ecNumber>
    </alternativeName>
    <alternativeName>
        <fullName evidence="52">Regulatory protein SIR2 homolog 6</fullName>
        <shortName evidence="54">hSIRT6</shortName>
    </alternativeName>
    <alternativeName>
        <fullName>SIR2-like protein 6</fullName>
    </alternativeName>
</protein>
<dbReference type="EC" id="2.3.1.-" evidence="16 22 32 38"/>
<dbReference type="EC" id="2.3.1.286" evidence="2 7 18 22 30 32"/>
<dbReference type="EC" id="2.4.2.-" evidence="11 32 33"/>
<dbReference type="EMBL" id="AF233396">
    <property type="protein sequence ID" value="AAF43432.1"/>
    <property type="molecule type" value="mRNA"/>
</dbReference>
<dbReference type="EMBL" id="AK074810">
    <property type="protein sequence ID" value="BAC11222.1"/>
    <property type="molecule type" value="mRNA"/>
</dbReference>
<dbReference type="EMBL" id="AK315048">
    <property type="protein sequence ID" value="BAG37527.1"/>
    <property type="molecule type" value="mRNA"/>
</dbReference>
<dbReference type="EMBL" id="CR457200">
    <property type="protein sequence ID" value="CAG33481.1"/>
    <property type="molecule type" value="mRNA"/>
</dbReference>
<dbReference type="EMBL" id="AC005620">
    <property type="protein sequence ID" value="AAC34468.1"/>
    <property type="status" value="ALT_SEQ"/>
    <property type="molecule type" value="Genomic_DNA"/>
</dbReference>
<dbReference type="EMBL" id="AC006930">
    <property type="protein sequence ID" value="AAD15478.1"/>
    <property type="status" value="ALT_SEQ"/>
    <property type="molecule type" value="Genomic_DNA"/>
</dbReference>
<dbReference type="EMBL" id="CH471139">
    <property type="protein sequence ID" value="EAW69252.1"/>
    <property type="molecule type" value="Genomic_DNA"/>
</dbReference>
<dbReference type="EMBL" id="BC004218">
    <property type="protein sequence ID" value="AAH04218.1"/>
    <property type="status" value="ALT_SEQ"/>
    <property type="molecule type" value="mRNA"/>
</dbReference>
<dbReference type="EMBL" id="BC005026">
    <property type="protein sequence ID" value="AAH05026.1"/>
    <property type="molecule type" value="mRNA"/>
</dbReference>
<dbReference type="EMBL" id="BC028220">
    <property type="protein sequence ID" value="AAH28220.1"/>
    <property type="molecule type" value="mRNA"/>
</dbReference>
<dbReference type="CCDS" id="CCDS12122.1">
    <molecule id="Q8N6T7-1"/>
</dbReference>
<dbReference type="CCDS" id="CCDS54199.1">
    <molecule id="Q8N6T7-2"/>
</dbReference>
<dbReference type="RefSeq" id="NP_001180214.1">
    <molecule id="Q8N6T7-2"/>
    <property type="nucleotide sequence ID" value="NM_001193285.3"/>
</dbReference>
<dbReference type="RefSeq" id="NP_001307987.1">
    <property type="nucleotide sequence ID" value="NM_001321058.1"/>
</dbReference>
<dbReference type="RefSeq" id="NP_001307988.1">
    <property type="nucleotide sequence ID" value="NM_001321059.1"/>
</dbReference>
<dbReference type="RefSeq" id="NP_001307989.1">
    <property type="nucleotide sequence ID" value="NM_001321060.1"/>
</dbReference>
<dbReference type="RefSeq" id="NP_001307990.1">
    <property type="nucleotide sequence ID" value="NM_001321061.1"/>
</dbReference>
<dbReference type="RefSeq" id="NP_001307991.1">
    <property type="nucleotide sequence ID" value="NM_001321062.1"/>
</dbReference>
<dbReference type="RefSeq" id="NP_001307992.1">
    <property type="nucleotide sequence ID" value="NM_001321063.1"/>
</dbReference>
<dbReference type="RefSeq" id="NP_001307993.1">
    <property type="nucleotide sequence ID" value="NM_001321064.1"/>
</dbReference>
<dbReference type="RefSeq" id="NP_057623.2">
    <molecule id="Q8N6T7-1"/>
    <property type="nucleotide sequence ID" value="NM_016539.4"/>
</dbReference>
<dbReference type="PDB" id="3K35">
    <property type="method" value="X-ray"/>
    <property type="resolution" value="2.00 A"/>
    <property type="chains" value="A/B/C/D/E/F=3-318"/>
</dbReference>
<dbReference type="PDB" id="3PKI">
    <property type="method" value="X-ray"/>
    <property type="resolution" value="2.04 A"/>
    <property type="chains" value="A/B/C/D/E/F=2-355"/>
</dbReference>
<dbReference type="PDB" id="3PKJ">
    <property type="method" value="X-ray"/>
    <property type="resolution" value="2.12 A"/>
    <property type="chains" value="A/B/C/D/E/F=2-355"/>
</dbReference>
<dbReference type="PDB" id="3ZG6">
    <property type="method" value="X-ray"/>
    <property type="resolution" value="2.20 A"/>
    <property type="chains" value="A=1-296"/>
</dbReference>
<dbReference type="PDB" id="5MF6">
    <property type="method" value="X-ray"/>
    <property type="resolution" value="1.87 A"/>
    <property type="chains" value="A/B=13-308"/>
</dbReference>
<dbReference type="PDB" id="5MFP">
    <property type="method" value="X-ray"/>
    <property type="resolution" value="1.98 A"/>
    <property type="chains" value="A/B=13-308"/>
</dbReference>
<dbReference type="PDB" id="5MFZ">
    <property type="method" value="X-ray"/>
    <property type="resolution" value="2.10 A"/>
    <property type="chains" value="A/B=13-308"/>
</dbReference>
<dbReference type="PDB" id="5MGN">
    <property type="method" value="X-ray"/>
    <property type="resolution" value="2.07 A"/>
    <property type="chains" value="A/B=13-308"/>
</dbReference>
<dbReference type="PDB" id="5X16">
    <property type="method" value="X-ray"/>
    <property type="resolution" value="1.97 A"/>
    <property type="chains" value="A=3-318"/>
</dbReference>
<dbReference type="PDB" id="5Y2F">
    <property type="method" value="X-ray"/>
    <property type="resolution" value="2.53 A"/>
    <property type="chains" value="A=3-318"/>
</dbReference>
<dbReference type="PDB" id="6HOY">
    <property type="method" value="X-ray"/>
    <property type="resolution" value="1.70 A"/>
    <property type="chains" value="A/B=13-308"/>
</dbReference>
<dbReference type="PDB" id="6QCD">
    <property type="method" value="X-ray"/>
    <property type="resolution" value="1.84 A"/>
    <property type="chains" value="A/B=13-308"/>
</dbReference>
<dbReference type="PDB" id="6QCE">
    <property type="method" value="X-ray"/>
    <property type="resolution" value="1.90 A"/>
    <property type="chains" value="A/B=13-308"/>
</dbReference>
<dbReference type="PDB" id="6QCH">
    <property type="method" value="X-ray"/>
    <property type="resolution" value="2.10 A"/>
    <property type="chains" value="A/B=13-308"/>
</dbReference>
<dbReference type="PDB" id="6QCJ">
    <property type="method" value="X-ray"/>
    <property type="resolution" value="2.01 A"/>
    <property type="chains" value="A/B=13-308"/>
</dbReference>
<dbReference type="PDB" id="6XUY">
    <property type="method" value="X-ray"/>
    <property type="resolution" value="2.13 A"/>
    <property type="chains" value="A/B=13-308"/>
</dbReference>
<dbReference type="PDB" id="6XV1">
    <property type="method" value="X-ray"/>
    <property type="resolution" value="1.95 A"/>
    <property type="chains" value="A/B=13-308"/>
</dbReference>
<dbReference type="PDB" id="6XV6">
    <property type="method" value="X-ray"/>
    <property type="resolution" value="1.75 A"/>
    <property type="chains" value="A/B/C/D/E/F=3-318"/>
</dbReference>
<dbReference type="PDB" id="6XVG">
    <property type="method" value="X-ray"/>
    <property type="resolution" value="2.10 A"/>
    <property type="chains" value="A/B/C/D/E/F=3-318"/>
</dbReference>
<dbReference type="PDB" id="6ZU4">
    <property type="method" value="X-ray"/>
    <property type="resolution" value="2.46 A"/>
    <property type="chains" value="A/B=13-308"/>
</dbReference>
<dbReference type="PDB" id="7CL0">
    <property type="method" value="X-ray"/>
    <property type="resolution" value="2.53 A"/>
    <property type="chains" value="A=1-355"/>
</dbReference>
<dbReference type="PDB" id="7CL1">
    <property type="method" value="X-ray"/>
    <property type="resolution" value="3.20 A"/>
    <property type="chains" value="A=1-355"/>
</dbReference>
<dbReference type="PDB" id="8AK5">
    <property type="method" value="X-ray"/>
    <property type="resolution" value="2.12 A"/>
    <property type="chains" value="A/B=13-308"/>
</dbReference>
<dbReference type="PDB" id="8AK6">
    <property type="method" value="X-ray"/>
    <property type="resolution" value="1.98 A"/>
    <property type="chains" value="A/B=13-308"/>
</dbReference>
<dbReference type="PDB" id="8AK7">
    <property type="method" value="X-ray"/>
    <property type="resolution" value="1.81 A"/>
    <property type="chains" value="A/B=13-308"/>
</dbReference>
<dbReference type="PDB" id="8AK8">
    <property type="method" value="X-ray"/>
    <property type="resolution" value="1.73 A"/>
    <property type="chains" value="A/B=13-308"/>
</dbReference>
<dbReference type="PDB" id="8AK9">
    <property type="method" value="X-ray"/>
    <property type="resolution" value="1.95 A"/>
    <property type="chains" value="A/B=13-308"/>
</dbReference>
<dbReference type="PDB" id="8AKA">
    <property type="method" value="X-ray"/>
    <property type="resolution" value="1.77 A"/>
    <property type="chains" value="A/B=13-308"/>
</dbReference>
<dbReference type="PDB" id="8AKB">
    <property type="method" value="X-ray"/>
    <property type="resolution" value="2.13 A"/>
    <property type="chains" value="A/B=13-308"/>
</dbReference>
<dbReference type="PDB" id="8AKC">
    <property type="method" value="X-ray"/>
    <property type="resolution" value="1.83 A"/>
    <property type="chains" value="A/B=13-308"/>
</dbReference>
<dbReference type="PDB" id="8AKD">
    <property type="method" value="X-ray"/>
    <property type="resolution" value="1.76 A"/>
    <property type="chains" value="A/B=13-308"/>
</dbReference>
<dbReference type="PDB" id="8AKE">
    <property type="method" value="X-ray"/>
    <property type="resolution" value="1.82 A"/>
    <property type="chains" value="A/B=13-308"/>
</dbReference>
<dbReference type="PDB" id="8AKF">
    <property type="method" value="X-ray"/>
    <property type="resolution" value="1.97 A"/>
    <property type="chains" value="A/B=13-308"/>
</dbReference>
<dbReference type="PDB" id="8AKG">
    <property type="method" value="X-ray"/>
    <property type="resolution" value="1.82 A"/>
    <property type="chains" value="A/B=13-308"/>
</dbReference>
<dbReference type="PDB" id="8BL0">
    <property type="method" value="X-ray"/>
    <property type="resolution" value="1.82 A"/>
    <property type="chains" value="A/B=13-308"/>
</dbReference>
<dbReference type="PDB" id="8BL1">
    <property type="method" value="X-ray"/>
    <property type="resolution" value="2.06 A"/>
    <property type="chains" value="A/B=13-308"/>
</dbReference>
<dbReference type="PDB" id="8CNM">
    <property type="method" value="X-ray"/>
    <property type="resolution" value="1.88 A"/>
    <property type="chains" value="A/B=13-308"/>
</dbReference>
<dbReference type="PDB" id="8CNO">
    <property type="method" value="X-ray"/>
    <property type="resolution" value="1.75 A"/>
    <property type="chains" value="A/B=13-308"/>
</dbReference>
<dbReference type="PDB" id="8F86">
    <property type="method" value="EM"/>
    <property type="resolution" value="3.10 A"/>
    <property type="chains" value="K=2-355"/>
</dbReference>
<dbReference type="PDB" id="8G57">
    <property type="method" value="EM"/>
    <property type="resolution" value="3.07 A"/>
    <property type="chains" value="K=1-355"/>
</dbReference>
<dbReference type="PDB" id="8I2B">
    <property type="method" value="X-ray"/>
    <property type="resolution" value="2.20 A"/>
    <property type="chains" value="A/B=13-298"/>
</dbReference>
<dbReference type="PDB" id="8OF4">
    <property type="method" value="EM"/>
    <property type="resolution" value="2.94 A"/>
    <property type="chains" value="L=1-355"/>
</dbReference>
<dbReference type="PDB" id="9G7H">
    <property type="method" value="X-ray"/>
    <property type="resolution" value="1.75 A"/>
    <property type="chains" value="A/B=13-308"/>
</dbReference>
<dbReference type="PDBsum" id="3K35"/>
<dbReference type="PDBsum" id="3PKI"/>
<dbReference type="PDBsum" id="3PKJ"/>
<dbReference type="PDBsum" id="3ZG6"/>
<dbReference type="PDBsum" id="5MF6"/>
<dbReference type="PDBsum" id="5MFP"/>
<dbReference type="PDBsum" id="5MFZ"/>
<dbReference type="PDBsum" id="5MGN"/>
<dbReference type="PDBsum" id="5X16"/>
<dbReference type="PDBsum" id="5Y2F"/>
<dbReference type="PDBsum" id="6HOY"/>
<dbReference type="PDBsum" id="6QCD"/>
<dbReference type="PDBsum" id="6QCE"/>
<dbReference type="PDBsum" id="6QCH"/>
<dbReference type="PDBsum" id="6QCJ"/>
<dbReference type="PDBsum" id="6XUY"/>
<dbReference type="PDBsum" id="6XV1"/>
<dbReference type="PDBsum" id="6XV6"/>
<dbReference type="PDBsum" id="6XVG"/>
<dbReference type="PDBsum" id="6ZU4"/>
<dbReference type="PDBsum" id="7CL0"/>
<dbReference type="PDBsum" id="7CL1"/>
<dbReference type="PDBsum" id="8AK5"/>
<dbReference type="PDBsum" id="8AK6"/>
<dbReference type="PDBsum" id="8AK7"/>
<dbReference type="PDBsum" id="8AK8"/>
<dbReference type="PDBsum" id="8AK9"/>
<dbReference type="PDBsum" id="8AKA"/>
<dbReference type="PDBsum" id="8AKB"/>
<dbReference type="PDBsum" id="8AKC"/>
<dbReference type="PDBsum" id="8AKD"/>
<dbReference type="PDBsum" id="8AKE"/>
<dbReference type="PDBsum" id="8AKF"/>
<dbReference type="PDBsum" id="8AKG"/>
<dbReference type="PDBsum" id="8BL0"/>
<dbReference type="PDBsum" id="8BL1"/>
<dbReference type="PDBsum" id="8CNM"/>
<dbReference type="PDBsum" id="8CNO"/>
<dbReference type="PDBsum" id="8F86"/>
<dbReference type="PDBsum" id="8G57"/>
<dbReference type="PDBsum" id="8I2B"/>
<dbReference type="PDBsum" id="8OF4"/>
<dbReference type="PDBsum" id="9G7H"/>
<dbReference type="EMDB" id="EMD-16842"/>
<dbReference type="EMDB" id="EMD-16845"/>
<dbReference type="EMDB" id="EMD-28915"/>
<dbReference type="EMDB" id="EMD-29735"/>
<dbReference type="SMR" id="Q8N6T7"/>
<dbReference type="BioGRID" id="119603">
    <property type="interactions" value="638"/>
</dbReference>
<dbReference type="CORUM" id="Q8N6T7"/>
<dbReference type="DIP" id="DIP-47346N"/>
<dbReference type="FunCoup" id="Q8N6T7">
    <property type="interactions" value="1951"/>
</dbReference>
<dbReference type="IntAct" id="Q8N6T7">
    <property type="interactions" value="105"/>
</dbReference>
<dbReference type="MINT" id="Q8N6T7"/>
<dbReference type="STRING" id="9606.ENSP00000337332"/>
<dbReference type="BindingDB" id="Q8N6T7"/>
<dbReference type="ChEMBL" id="CHEMBL2163182"/>
<dbReference type="DrugCentral" id="Q8N6T7"/>
<dbReference type="GuidetoPHARMACOLOGY" id="2712"/>
<dbReference type="iPTMnet" id="Q8N6T7"/>
<dbReference type="PhosphoSitePlus" id="Q8N6T7"/>
<dbReference type="BioMuta" id="SIRT6"/>
<dbReference type="DMDM" id="38258612"/>
<dbReference type="jPOST" id="Q8N6T7"/>
<dbReference type="MassIVE" id="Q8N6T7"/>
<dbReference type="PaxDb" id="9606-ENSP00000337332"/>
<dbReference type="PeptideAtlas" id="Q8N6T7"/>
<dbReference type="ProteomicsDB" id="72232">
    <molecule id="Q8N6T7-1"/>
</dbReference>
<dbReference type="ProteomicsDB" id="72233">
    <molecule id="Q8N6T7-2"/>
</dbReference>
<dbReference type="Pumba" id="Q8N6T7"/>
<dbReference type="Antibodypedia" id="11389">
    <property type="antibodies" value="707 antibodies from 42 providers"/>
</dbReference>
<dbReference type="DNASU" id="51548"/>
<dbReference type="Ensembl" id="ENST00000305232.10">
    <molecule id="Q8N6T7-2"/>
    <property type="protein sequence ID" value="ENSP00000305310.5"/>
    <property type="gene ID" value="ENSG00000077463.15"/>
</dbReference>
<dbReference type="Ensembl" id="ENST00000337491.7">
    <molecule id="Q8N6T7-1"/>
    <property type="protein sequence ID" value="ENSP00000337332.1"/>
    <property type="gene ID" value="ENSG00000077463.15"/>
</dbReference>
<dbReference type="GeneID" id="51548"/>
<dbReference type="KEGG" id="hsa:51548"/>
<dbReference type="MANE-Select" id="ENST00000337491.7">
    <property type="protein sequence ID" value="ENSP00000337332.1"/>
    <property type="RefSeq nucleotide sequence ID" value="NM_016539.4"/>
    <property type="RefSeq protein sequence ID" value="NP_057623.2"/>
</dbReference>
<dbReference type="UCSC" id="uc002lzo.4">
    <molecule id="Q8N6T7-1"/>
    <property type="organism name" value="human"/>
</dbReference>
<dbReference type="AGR" id="HGNC:14934"/>
<dbReference type="CTD" id="51548"/>
<dbReference type="DisGeNET" id="51548"/>
<dbReference type="GeneCards" id="SIRT6"/>
<dbReference type="HGNC" id="HGNC:14934">
    <property type="gene designation" value="SIRT6"/>
</dbReference>
<dbReference type="HPA" id="ENSG00000077463">
    <property type="expression patterns" value="Low tissue specificity"/>
</dbReference>
<dbReference type="MalaCards" id="SIRT6"/>
<dbReference type="MIM" id="606211">
    <property type="type" value="gene"/>
</dbReference>
<dbReference type="neXtProt" id="NX_Q8N6T7"/>
<dbReference type="OpenTargets" id="ENSG00000077463"/>
<dbReference type="Orphanet" id="580933">
    <property type="disease" value="Lethal brain and heart developmental defects"/>
</dbReference>
<dbReference type="PharmGKB" id="PA37939"/>
<dbReference type="VEuPathDB" id="HostDB:ENSG00000077463"/>
<dbReference type="eggNOG" id="KOG1905">
    <property type="taxonomic scope" value="Eukaryota"/>
</dbReference>
<dbReference type="GeneTree" id="ENSGT00940000160088"/>
<dbReference type="HOGENOM" id="CLU_023643_6_0_1"/>
<dbReference type="InParanoid" id="Q8N6T7"/>
<dbReference type="OMA" id="EQCKKCR"/>
<dbReference type="OrthoDB" id="2919105at2759"/>
<dbReference type="PAN-GO" id="Q8N6T7">
    <property type="GO annotations" value="5 GO annotations based on evolutionary models"/>
</dbReference>
<dbReference type="PhylomeDB" id="Q8N6T7"/>
<dbReference type="TreeFam" id="TF106184"/>
<dbReference type="BRENDA" id="2.3.1.B41">
    <property type="organism ID" value="2681"/>
</dbReference>
<dbReference type="PathwayCommons" id="Q8N6T7"/>
<dbReference type="Reactome" id="R-HSA-1912408">
    <property type="pathway name" value="Pre-NOTCH Transcription and Translation"/>
</dbReference>
<dbReference type="Reactome" id="R-HSA-5693607">
    <property type="pathway name" value="Processing of DNA double-strand break ends"/>
</dbReference>
<dbReference type="SignaLink" id="Q8N6T7"/>
<dbReference type="SIGNOR" id="Q8N6T7"/>
<dbReference type="BioGRID-ORCS" id="51548">
    <property type="hits" value="35 hits in 1182 CRISPR screens"/>
</dbReference>
<dbReference type="CD-CODE" id="DEE660B4">
    <property type="entry name" value="Stress granule"/>
</dbReference>
<dbReference type="ChiTaRS" id="SIRT6">
    <property type="organism name" value="human"/>
</dbReference>
<dbReference type="EvolutionaryTrace" id="Q8N6T7"/>
<dbReference type="GeneWiki" id="SIRT6"/>
<dbReference type="GenomeRNAi" id="51548"/>
<dbReference type="Pharos" id="Q8N6T7">
    <property type="development level" value="Tchem"/>
</dbReference>
<dbReference type="PRO" id="PR:Q8N6T7"/>
<dbReference type="Proteomes" id="UP000005640">
    <property type="component" value="Chromosome 19"/>
</dbReference>
<dbReference type="RNAct" id="Q8N6T7">
    <property type="molecule type" value="protein"/>
</dbReference>
<dbReference type="Bgee" id="ENSG00000077463">
    <property type="expression patterns" value="Expressed in mucosa of transverse colon and 134 other cell types or tissues"/>
</dbReference>
<dbReference type="ExpressionAtlas" id="Q8N6T7">
    <property type="expression patterns" value="baseline and differential"/>
</dbReference>
<dbReference type="GO" id="GO:0000785">
    <property type="term" value="C:chromatin"/>
    <property type="evidence" value="ECO:0000314"/>
    <property type="project" value="UniProtKB"/>
</dbReference>
<dbReference type="GO" id="GO:0099115">
    <property type="term" value="C:chromosome, subtelomeric region"/>
    <property type="evidence" value="ECO:0000314"/>
    <property type="project" value="GO_Central"/>
</dbReference>
<dbReference type="GO" id="GO:0005783">
    <property type="term" value="C:endoplasmic reticulum"/>
    <property type="evidence" value="ECO:0000314"/>
    <property type="project" value="UniProtKB"/>
</dbReference>
<dbReference type="GO" id="GO:0043231">
    <property type="term" value="C:intracellular membrane-bounded organelle"/>
    <property type="evidence" value="ECO:0000314"/>
    <property type="project" value="HPA"/>
</dbReference>
<dbReference type="GO" id="GO:0005654">
    <property type="term" value="C:nucleoplasm"/>
    <property type="evidence" value="ECO:0000314"/>
    <property type="project" value="HPA"/>
</dbReference>
<dbReference type="GO" id="GO:0005634">
    <property type="term" value="C:nucleus"/>
    <property type="evidence" value="ECO:0000314"/>
    <property type="project" value="UniProtKB"/>
</dbReference>
<dbReference type="GO" id="GO:0005721">
    <property type="term" value="C:pericentric heterochromatin"/>
    <property type="evidence" value="ECO:0000314"/>
    <property type="project" value="UniProtKB"/>
</dbReference>
<dbReference type="GO" id="GO:0090734">
    <property type="term" value="C:site of DNA damage"/>
    <property type="evidence" value="ECO:0000314"/>
    <property type="project" value="UniProtKB"/>
</dbReference>
<dbReference type="GO" id="GO:0035861">
    <property type="term" value="C:site of double-strand break"/>
    <property type="evidence" value="ECO:0000314"/>
    <property type="project" value="UniProtKB"/>
</dbReference>
<dbReference type="GO" id="GO:0003682">
    <property type="term" value="F:chromatin binding"/>
    <property type="evidence" value="ECO:0000314"/>
    <property type="project" value="UniProt"/>
</dbReference>
<dbReference type="GO" id="GO:0031490">
    <property type="term" value="F:chromatin DNA binding"/>
    <property type="evidence" value="ECO:0000314"/>
    <property type="project" value="UniProtKB"/>
</dbReference>
<dbReference type="GO" id="GO:0003684">
    <property type="term" value="F:damaged DNA binding"/>
    <property type="evidence" value="ECO:0000314"/>
    <property type="project" value="UniProtKB"/>
</dbReference>
<dbReference type="GO" id="GO:0003677">
    <property type="term" value="F:DNA binding"/>
    <property type="evidence" value="ECO:0000315"/>
    <property type="project" value="DisProt"/>
</dbReference>
<dbReference type="GO" id="GO:0140612">
    <property type="term" value="F:DNA damage sensor activity"/>
    <property type="evidence" value="ECO:0000314"/>
    <property type="project" value="UniProtKB"/>
</dbReference>
<dbReference type="GO" id="GO:0030234">
    <property type="term" value="F:enzyme regulator activity"/>
    <property type="evidence" value="ECO:0000314"/>
    <property type="project" value="UniProt"/>
</dbReference>
<dbReference type="GO" id="GO:0017136">
    <property type="term" value="F:histone deacetylase activity, NAD-dependent"/>
    <property type="evidence" value="ECO:0000314"/>
    <property type="project" value="UniProt"/>
</dbReference>
<dbReference type="GO" id="GO:0035033">
    <property type="term" value="F:histone deacetylase regulator activity"/>
    <property type="evidence" value="ECO:0000314"/>
    <property type="project" value="UniProt"/>
</dbReference>
<dbReference type="GO" id="GO:0097372">
    <property type="term" value="F:histone H3K18 deacetylase activity, NAD-dependent"/>
    <property type="evidence" value="ECO:0000314"/>
    <property type="project" value="UniProtKB"/>
</dbReference>
<dbReference type="GO" id="GO:0140765">
    <property type="term" value="F:histone H3K56 deacetylase activity, NAD-dependent"/>
    <property type="evidence" value="ECO:0000314"/>
    <property type="project" value="UniProtKB"/>
</dbReference>
<dbReference type="GO" id="GO:0032129">
    <property type="term" value="F:histone H3K9 deacetylase activity, hydrolytic mechanism"/>
    <property type="evidence" value="ECO:0000269"/>
    <property type="project" value="DisProt"/>
</dbReference>
<dbReference type="GO" id="GO:0046969">
    <property type="term" value="F:histone H3K9 deacetylase activity, NAD-dependent"/>
    <property type="evidence" value="ECO:0000314"/>
    <property type="project" value="UniProtKB"/>
</dbReference>
<dbReference type="GO" id="GO:0106222">
    <property type="term" value="F:lncRNA binding"/>
    <property type="evidence" value="ECO:0000314"/>
    <property type="project" value="UniProtKB"/>
</dbReference>
<dbReference type="GO" id="GO:0070403">
    <property type="term" value="F:NAD+ binding"/>
    <property type="evidence" value="ECO:0000250"/>
    <property type="project" value="UniProtKB"/>
</dbReference>
<dbReference type="GO" id="GO:0003950">
    <property type="term" value="F:NAD+ poly-ADP-ribosyltransferase activity"/>
    <property type="evidence" value="ECO:0000304"/>
    <property type="project" value="BHF-UCL"/>
</dbReference>
<dbReference type="GO" id="GO:1990404">
    <property type="term" value="F:NAD+-protein mono-ADP-ribosyltransferase activity"/>
    <property type="evidence" value="ECO:0000314"/>
    <property type="project" value="UniProtKB"/>
</dbReference>
<dbReference type="GO" id="GO:0106274">
    <property type="term" value="F:NAD+-protein-arginine ADP-ribosyltransferase activity"/>
    <property type="evidence" value="ECO:0000250"/>
    <property type="project" value="UniProtKB"/>
</dbReference>
<dbReference type="GO" id="GO:0140804">
    <property type="term" value="F:NAD+-protein-lysine ADP-ribosyltransferase activity"/>
    <property type="evidence" value="ECO:0007669"/>
    <property type="project" value="RHEA"/>
</dbReference>
<dbReference type="GO" id="GO:0140773">
    <property type="term" value="F:NAD-dependent protein demyristoylase activity"/>
    <property type="evidence" value="ECO:0000314"/>
    <property type="project" value="UniProtKB"/>
</dbReference>
<dbReference type="GO" id="GO:0140774">
    <property type="term" value="F:NAD-dependent protein depalmitoylase activity"/>
    <property type="evidence" value="ECO:0000314"/>
    <property type="project" value="UniProtKB"/>
</dbReference>
<dbReference type="GO" id="GO:0034979">
    <property type="term" value="F:NAD-dependent protein lysine deacetylase activity"/>
    <property type="evidence" value="ECO:0000314"/>
    <property type="project" value="UniProtKB"/>
</dbReference>
<dbReference type="GO" id="GO:0031491">
    <property type="term" value="F:nucleosome binding"/>
    <property type="evidence" value="ECO:0000314"/>
    <property type="project" value="UniProtKB"/>
</dbReference>
<dbReference type="GO" id="GO:0016779">
    <property type="term" value="F:nucleotidyltransferase activity"/>
    <property type="evidence" value="ECO:0007669"/>
    <property type="project" value="UniProtKB-KW"/>
</dbReference>
<dbReference type="GO" id="GO:0042803">
    <property type="term" value="F:protein homodimerization activity"/>
    <property type="evidence" value="ECO:0000314"/>
    <property type="project" value="UniProtKB"/>
</dbReference>
<dbReference type="GO" id="GO:1904841">
    <property type="term" value="F:TORC2 complex binding"/>
    <property type="evidence" value="ECO:0000250"/>
    <property type="project" value="UniProtKB"/>
</dbReference>
<dbReference type="GO" id="GO:0003714">
    <property type="term" value="F:transcription corepressor activity"/>
    <property type="evidence" value="ECO:0000318"/>
    <property type="project" value="GO_Central"/>
</dbReference>
<dbReference type="GO" id="GO:0008270">
    <property type="term" value="F:zinc ion binding"/>
    <property type="evidence" value="ECO:0000250"/>
    <property type="project" value="UniProtKB"/>
</dbReference>
<dbReference type="GO" id="GO:0006284">
    <property type="term" value="P:base-excision repair"/>
    <property type="evidence" value="ECO:0007669"/>
    <property type="project" value="Ensembl"/>
</dbReference>
<dbReference type="GO" id="GO:0055007">
    <property type="term" value="P:cardiac muscle cell differentiation"/>
    <property type="evidence" value="ECO:0000250"/>
    <property type="project" value="UniProtKB"/>
</dbReference>
<dbReference type="GO" id="GO:0006338">
    <property type="term" value="P:chromatin remodeling"/>
    <property type="evidence" value="ECO:0000314"/>
    <property type="project" value="UniProt"/>
</dbReference>
<dbReference type="GO" id="GO:0032922">
    <property type="term" value="P:circadian regulation of gene expression"/>
    <property type="evidence" value="ECO:0000250"/>
    <property type="project" value="UniProtKB"/>
</dbReference>
<dbReference type="GO" id="GO:0008340">
    <property type="term" value="P:determination of adult lifespan"/>
    <property type="evidence" value="ECO:0000315"/>
    <property type="project" value="UniProtKB"/>
</dbReference>
<dbReference type="GO" id="GO:0140861">
    <property type="term" value="P:DNA repair-dependent chromatin remodeling"/>
    <property type="evidence" value="ECO:0007669"/>
    <property type="project" value="Ensembl"/>
</dbReference>
<dbReference type="GO" id="GO:0006302">
    <property type="term" value="P:double-strand break repair"/>
    <property type="evidence" value="ECO:0000314"/>
    <property type="project" value="UniProtKB"/>
</dbReference>
<dbReference type="GO" id="GO:0042593">
    <property type="term" value="P:glucose homeostasis"/>
    <property type="evidence" value="ECO:0007669"/>
    <property type="project" value="Ensembl"/>
</dbReference>
<dbReference type="GO" id="GO:0042181">
    <property type="term" value="P:ketone biosynthetic process"/>
    <property type="evidence" value="ECO:0000250"/>
    <property type="project" value="UniProtKB"/>
</dbReference>
<dbReference type="GO" id="GO:0008285">
    <property type="term" value="P:negative regulation of cell population proliferation"/>
    <property type="evidence" value="ECO:0007669"/>
    <property type="project" value="Ensembl"/>
</dbReference>
<dbReference type="GO" id="GO:2000773">
    <property type="term" value="P:negative regulation of cellular senescence"/>
    <property type="evidence" value="ECO:0000314"/>
    <property type="project" value="UniProtKB"/>
</dbReference>
<dbReference type="GO" id="GO:0046325">
    <property type="term" value="P:negative regulation of D-glucose import"/>
    <property type="evidence" value="ECO:0007669"/>
    <property type="project" value="Ensembl"/>
</dbReference>
<dbReference type="GO" id="GO:0045814">
    <property type="term" value="P:negative regulation of gene expression, epigenetic"/>
    <property type="evidence" value="ECO:0000315"/>
    <property type="project" value="BHF-UCL"/>
</dbReference>
<dbReference type="GO" id="GO:0045721">
    <property type="term" value="P:negative regulation of gluconeogenesis"/>
    <property type="evidence" value="ECO:0000314"/>
    <property type="project" value="UniProtKB"/>
</dbReference>
<dbReference type="GO" id="GO:0045820">
    <property type="term" value="P:negative regulation of glycolytic process"/>
    <property type="evidence" value="ECO:0000314"/>
    <property type="project" value="UniProtKB"/>
</dbReference>
<dbReference type="GO" id="GO:0042308">
    <property type="term" value="P:negative regulation of protein import into nucleus"/>
    <property type="evidence" value="ECO:0000250"/>
    <property type="project" value="UniProtKB"/>
</dbReference>
<dbReference type="GO" id="GO:0120186">
    <property type="term" value="P:negative regulation of protein localization to chromatin"/>
    <property type="evidence" value="ECO:0000314"/>
    <property type="project" value="UniProt"/>
</dbReference>
<dbReference type="GO" id="GO:0000122">
    <property type="term" value="P:negative regulation of transcription by RNA polymerase II"/>
    <property type="evidence" value="ECO:0000314"/>
    <property type="project" value="UniProt"/>
</dbReference>
<dbReference type="GO" id="GO:0034244">
    <property type="term" value="P:negative regulation of transcription elongation by RNA polymerase II"/>
    <property type="evidence" value="ECO:0000250"/>
    <property type="project" value="UniProtKB"/>
</dbReference>
<dbReference type="GO" id="GO:0031508">
    <property type="term" value="P:pericentric heterochromatin formation"/>
    <property type="evidence" value="ECO:0000314"/>
    <property type="project" value="UniProtKB"/>
</dbReference>
<dbReference type="GO" id="GO:1905555">
    <property type="term" value="P:positive regulation of blood vessel branching"/>
    <property type="evidence" value="ECO:0000315"/>
    <property type="project" value="BHF-UCL"/>
</dbReference>
<dbReference type="GO" id="GO:1902732">
    <property type="term" value="P:positive regulation of chondrocyte proliferation"/>
    <property type="evidence" value="ECO:0000315"/>
    <property type="project" value="BHF-UCL"/>
</dbReference>
<dbReference type="GO" id="GO:0120162">
    <property type="term" value="P:positive regulation of cold-induced thermogenesis"/>
    <property type="evidence" value="ECO:0000250"/>
    <property type="project" value="UniProtKB"/>
</dbReference>
<dbReference type="GO" id="GO:2000781">
    <property type="term" value="P:positive regulation of double-strand break repair"/>
    <property type="evidence" value="ECO:0000314"/>
    <property type="project" value="UniProtKB"/>
</dbReference>
<dbReference type="GO" id="GO:0045600">
    <property type="term" value="P:positive regulation of fat cell differentiation"/>
    <property type="evidence" value="ECO:0000250"/>
    <property type="project" value="UniProtKB"/>
</dbReference>
<dbReference type="GO" id="GO:0048146">
    <property type="term" value="P:positive regulation of fibroblast proliferation"/>
    <property type="evidence" value="ECO:0007669"/>
    <property type="project" value="Ensembl"/>
</dbReference>
<dbReference type="GO" id="GO:0032024">
    <property type="term" value="P:positive regulation of insulin secretion"/>
    <property type="evidence" value="ECO:0000250"/>
    <property type="project" value="UniProtKB"/>
</dbReference>
<dbReference type="GO" id="GO:0032436">
    <property type="term" value="P:positive regulation of proteasomal ubiquitin-dependent protein catabolic process"/>
    <property type="evidence" value="ECO:0000315"/>
    <property type="project" value="CACAO"/>
</dbReference>
<dbReference type="GO" id="GO:0046827">
    <property type="term" value="P:positive regulation of protein export from nucleus"/>
    <property type="evidence" value="ECO:0000314"/>
    <property type="project" value="UniProtKB"/>
</dbReference>
<dbReference type="GO" id="GO:0120187">
    <property type="term" value="P:positive regulation of protein localization to chromatin"/>
    <property type="evidence" value="ECO:0000250"/>
    <property type="project" value="UniProtKB"/>
</dbReference>
<dbReference type="GO" id="GO:2000738">
    <property type="term" value="P:positive regulation of stem cell differentiation"/>
    <property type="evidence" value="ECO:0000314"/>
    <property type="project" value="UniProt"/>
</dbReference>
<dbReference type="GO" id="GO:1902459">
    <property type="term" value="P:positive regulation of stem cell population maintenance"/>
    <property type="evidence" value="ECO:0000314"/>
    <property type="project" value="UniProt"/>
</dbReference>
<dbReference type="GO" id="GO:2000648">
    <property type="term" value="P:positive regulation of stem cell proliferation"/>
    <property type="evidence" value="ECO:0007669"/>
    <property type="project" value="Ensembl"/>
</dbReference>
<dbReference type="GO" id="GO:0032206">
    <property type="term" value="P:positive regulation of telomere maintenance"/>
    <property type="evidence" value="ECO:0000315"/>
    <property type="project" value="BHF-UCL"/>
</dbReference>
<dbReference type="GO" id="GO:1905564">
    <property type="term" value="P:positive regulation of vascular endothelial cell proliferation"/>
    <property type="evidence" value="ECO:0000315"/>
    <property type="project" value="BHF-UCL"/>
</dbReference>
<dbReference type="GO" id="GO:0006476">
    <property type="term" value="P:protein deacetylation"/>
    <property type="evidence" value="ECO:0000315"/>
    <property type="project" value="CACAO"/>
</dbReference>
<dbReference type="GO" id="GO:0051697">
    <property type="term" value="P:protein delipidation"/>
    <property type="evidence" value="ECO:0000314"/>
    <property type="project" value="UniProtKB"/>
</dbReference>
<dbReference type="GO" id="GO:0031648">
    <property type="term" value="P:protein destabilization"/>
    <property type="evidence" value="ECO:0000314"/>
    <property type="project" value="UniProt"/>
</dbReference>
<dbReference type="GO" id="GO:0006606">
    <property type="term" value="P:protein import into nucleus"/>
    <property type="evidence" value="ECO:0000314"/>
    <property type="project" value="DisProt"/>
</dbReference>
<dbReference type="GO" id="GO:1990166">
    <property type="term" value="P:protein localization to site of double-strand break"/>
    <property type="evidence" value="ECO:0000314"/>
    <property type="project" value="UniProt"/>
</dbReference>
<dbReference type="GO" id="GO:0042752">
    <property type="term" value="P:regulation of circadian rhythm"/>
    <property type="evidence" value="ECO:0000250"/>
    <property type="project" value="UniProtKB"/>
</dbReference>
<dbReference type="GO" id="GO:0010569">
    <property type="term" value="P:regulation of double-strand break repair via homologous recombination"/>
    <property type="evidence" value="ECO:0000314"/>
    <property type="project" value="UniProtKB"/>
</dbReference>
<dbReference type="GO" id="GO:0050994">
    <property type="term" value="P:regulation of lipid catabolic process"/>
    <property type="evidence" value="ECO:0000250"/>
    <property type="project" value="UniProtKB"/>
</dbReference>
<dbReference type="GO" id="GO:0019216">
    <property type="term" value="P:regulation of lipid metabolic process"/>
    <property type="evidence" value="ECO:0000250"/>
    <property type="project" value="UniProtKB"/>
</dbReference>
<dbReference type="GO" id="GO:1903076">
    <property type="term" value="P:regulation of protein localization to plasma membrane"/>
    <property type="evidence" value="ECO:0000314"/>
    <property type="project" value="UniProt"/>
</dbReference>
<dbReference type="GO" id="GO:0050708">
    <property type="term" value="P:regulation of protein secretion"/>
    <property type="evidence" value="ECO:0000314"/>
    <property type="project" value="UniProt"/>
</dbReference>
<dbReference type="GO" id="GO:0009411">
    <property type="term" value="P:response to UV"/>
    <property type="evidence" value="ECO:0000314"/>
    <property type="project" value="UniProtKB"/>
</dbReference>
<dbReference type="GO" id="GO:0031509">
    <property type="term" value="P:subtelomeric heterochromatin formation"/>
    <property type="evidence" value="ECO:0000315"/>
    <property type="project" value="BHF-UCL"/>
</dbReference>
<dbReference type="GO" id="GO:0010526">
    <property type="term" value="P:transposable element silencing"/>
    <property type="evidence" value="ECO:0000250"/>
    <property type="project" value="UniProtKB"/>
</dbReference>
<dbReference type="CDD" id="cd01410">
    <property type="entry name" value="SIRT7"/>
    <property type="match status" value="1"/>
</dbReference>
<dbReference type="FunFam" id="2.20.28.200:FF:000001">
    <property type="entry name" value="NAD-dependent protein deacetylase sirtuin-6"/>
    <property type="match status" value="1"/>
</dbReference>
<dbReference type="FunFam" id="3.40.50.1220:FF:000029">
    <property type="entry name" value="NAD-dependent protein deacetylase sirtuin-6 isoform X2"/>
    <property type="match status" value="1"/>
</dbReference>
<dbReference type="FunFam" id="3.40.50.1220:FF:000038">
    <property type="entry name" value="NAD-dependent protein deacetylase sirtuin-6 isoform X2"/>
    <property type="match status" value="1"/>
</dbReference>
<dbReference type="Gene3D" id="2.20.28.200">
    <property type="match status" value="1"/>
</dbReference>
<dbReference type="Gene3D" id="3.40.50.1220">
    <property type="entry name" value="TPP-binding domain"/>
    <property type="match status" value="1"/>
</dbReference>
<dbReference type="IDEAL" id="IID00486"/>
<dbReference type="InterPro" id="IPR029035">
    <property type="entry name" value="DHS-like_NAD/FAD-binding_dom"/>
</dbReference>
<dbReference type="InterPro" id="IPR050134">
    <property type="entry name" value="NAD-dep_sirtuin_deacylases"/>
</dbReference>
<dbReference type="InterPro" id="IPR003000">
    <property type="entry name" value="Sirtuin"/>
</dbReference>
<dbReference type="InterPro" id="IPR026590">
    <property type="entry name" value="Ssirtuin_cat_dom"/>
</dbReference>
<dbReference type="PANTHER" id="PTHR11085">
    <property type="entry name" value="NAD-DEPENDENT PROTEIN DEACYLASE SIRTUIN-5, MITOCHONDRIAL-RELATED"/>
    <property type="match status" value="1"/>
</dbReference>
<dbReference type="PANTHER" id="PTHR11085:SF12">
    <property type="entry name" value="NAD-DEPENDENT PROTEIN DEACYLASE SIRTUIN-6"/>
    <property type="match status" value="1"/>
</dbReference>
<dbReference type="Pfam" id="PF02146">
    <property type="entry name" value="SIR2"/>
    <property type="match status" value="1"/>
</dbReference>
<dbReference type="SUPFAM" id="SSF52467">
    <property type="entry name" value="DHS-like NAD/FAD-binding domain"/>
    <property type="match status" value="1"/>
</dbReference>
<dbReference type="PROSITE" id="PS50305">
    <property type="entry name" value="SIRTUIN"/>
    <property type="match status" value="1"/>
</dbReference>
<keyword id="KW-0002">3D-structure</keyword>
<keyword id="KW-0007">Acetylation</keyword>
<keyword id="KW-0012">Acyltransferase</keyword>
<keyword id="KW-0025">Alternative splicing</keyword>
<keyword id="KW-0156">Chromatin regulator</keyword>
<keyword id="KW-0158">Chromosome</keyword>
<keyword id="KW-0217">Developmental protein</keyword>
<keyword id="KW-0227">DNA damage</keyword>
<keyword id="KW-0234">DNA repair</keyword>
<keyword id="KW-0238">DNA-binding</keyword>
<keyword id="KW-0256">Endoplasmic reticulum</keyword>
<keyword id="KW-0328">Glycosyltransferase</keyword>
<keyword id="KW-1017">Isopeptide bond</keyword>
<keyword id="KW-0479">Metal-binding</keyword>
<keyword id="KW-0520">NAD</keyword>
<keyword id="KW-0548">Nucleotidyltransferase</keyword>
<keyword id="KW-0539">Nucleus</keyword>
<keyword id="KW-0597">Phosphoprotein</keyword>
<keyword id="KW-1267">Proteomics identification</keyword>
<keyword id="KW-1185">Reference proteome</keyword>
<keyword id="KW-0694">RNA-binding</keyword>
<keyword id="KW-0779">Telomere</keyword>
<keyword id="KW-0808">Transferase</keyword>
<keyword id="KW-0043">Tumor suppressor</keyword>
<keyword id="KW-0832">Ubl conjugation</keyword>
<keyword id="KW-0862">Zinc</keyword>
<proteinExistence type="evidence at protein level"/>
<organism>
    <name type="scientific">Homo sapiens</name>
    <name type="common">Human</name>
    <dbReference type="NCBI Taxonomy" id="9606"/>
    <lineage>
        <taxon>Eukaryota</taxon>
        <taxon>Metazoa</taxon>
        <taxon>Chordata</taxon>
        <taxon>Craniata</taxon>
        <taxon>Vertebrata</taxon>
        <taxon>Euteleostomi</taxon>
        <taxon>Mammalia</taxon>
        <taxon>Eutheria</taxon>
        <taxon>Euarchontoglires</taxon>
        <taxon>Primates</taxon>
        <taxon>Haplorrhini</taxon>
        <taxon>Catarrhini</taxon>
        <taxon>Hominidae</taxon>
        <taxon>Homo</taxon>
    </lineage>
</organism>
<gene>
    <name evidence="52 63" type="primary">SIRT6</name>
    <name type="synonym">SIR2L6</name>
</gene>
<sequence>MSVNYAAGLSPYADKGKCGLPEIFDPPEELERKVWELARLVWQSSSVVFHTGAGISTASGIPDFRGPHGVWTMEERGLAPKFDTTFESARPTQTHMALVQLERVGLLRFLVSQNVDGLHVRSGFPRDKLAELHGNMFVEECAKCKTQYVRDTVVGTMGLKATGRLCTVAKARGLRACRGELRDTILDWEDSLPDRDLALADEASRNADLSITLGTSLQIRPSGNLPLATKRRGGRLVIVNLQPTKHDRHADLRIHGYVDEVMTRLMKHLGLEIPAWDGPRVLERALPPLPRPPTPKLEPKEESPTRINGSIPAGPKQEPCAQHNGSEPASPKRERPTSPAPHRPPKRVKAKAVPS</sequence>
<name>SIR6_HUMAN</name>
<comment type="function">
    <text evidence="1 7 8 9 10 11 12 13 14 15 16 17 18 19 20 22 23 25 26 28 29 30 31 32 33 36 37 38 39 42 43 44 45">NAD-dependent protein deacetylase, deacylase and mono-ADP-ribosyltransferase that plays an essential role in DNA damage repair, telomere maintenance, metabolic homeostasis, inflammation, tumorigenesis and aging (PubMed:18337721, PubMed:19135889, PubMed:19625767, PubMed:21362626, PubMed:21680843, PubMed:23217706, PubMed:23552949, PubMed:23653361, PubMed:24052263, PubMed:27180906, PubMed:27322069, PubMed:29555651, PubMed:30374165). Displays protein-lysine deacetylase or defatty-acylase (demyristoylase and depalmitoylase) activity, depending on the context (PubMed:23552949, PubMed:24052263, PubMed:27322069). Acts as a key histone deacetylase by catalyzing deacetylation of histone H3 at 'Lys-9', 'Lys-18' and 'Lys-56' (H3K9ac, H3K18ac and H3K56ac, respectively), suppressing target gene expression of several transcription factors, including NF-kappa-B (PubMed:19625767, PubMed:21362626, PubMed:23892288, PubMed:23911928, PubMed:24012758, PubMed:26456828, PubMed:26898756, PubMed:27043296, PubMed:27180906, PubMed:30374165, PubMed:33067423). Acts as an inhibitor of transcription elongation by mediating deacetylation of H3K9ac and H3K56ac, preventing release of NELFE from chromatin and causing transcriptional pausing (By similarity). Involved in DNA repair by promoting double-strand break (DSB) repair: acts as a DSB sensor by recognizing and binding DSB sites, leading to (1) recruitment of DNA repair proteins, such as SMARCA5/SNF2H, and (2) deacetylation of histone H3K9ac and H3K56ac (PubMed:23911928, PubMed:31995034, PubMed:32538779). SIRT6 participation to DSB repair is probably involved in extension of life span (By similarity). Also promotes DNA repair by deacetylating non-histone proteins, such as DDB2 and p53/TP53 (PubMed:29474172, PubMed:32789493). Specifically deacetylates H3K18ac at pericentric heterochromatin, thereby maintaining pericentric heterochromatin silencing at centromeres and protecting against genomic instability and cellular senescence (PubMed:27043296). Involved in telomere maintenance by catalyzing deacetylation of histone H3 in telomeric chromatin, regulating telomere position effect and telomere movement in response to DNA damage (PubMed:18337721, PubMed:19625767, PubMed:21847107). Required for embryonic stem cell differentiation by mediating histone deacetylation of H3K9ac (PubMed:25915124, PubMed:29555651). Plays a major role in metabolism by regulating processes such as glycolysis, gluconeogenesis, insulin secretion and lipid metabolism (PubMed:24012758, PubMed:26787900). Inhibits glycolysis via histone deacetylase activity and by acting as a corepressor of the transcription factor HIF1A, thereby controlling the expression of multiple glycolytic genes (By similarity). Has tumor suppressor activity by repressing glycolysis, thereby inhibiting the Warburg effect (PubMed:23217706). Also regulates glycolysis and tumorigenesis by mediating deacetylation and nuclear export of non-histone proteins, such as isoform M2 of PKM (PKM2) (PubMed:26787900). Acts as a negative regulator of gluconeogenesis by mediating deacetylation of non-histone proteins, such as FOXO1 and KAT2A/GCN5 (PubMed:23142079, PubMed:25009184). Promotes beta-oxidation of fatty acids during fasting by catalyzing deacetylation of NCOA2, inducing coactivation of PPARA (By similarity). Acts as a regulator of lipid catabolism in brown adipocytes, both by catalyzing deacetylation of histones and non-histone proteins, such as FOXO1 (By similarity). Also acts as a regulator of circadian rhythms, both by regulating expression of clock-controlled genes involved in lipid and carbohydrate metabolism, and by catalyzing deacetylation of PER2 (By similarity). The defatty-acylase activity is specifically involved in regulation of protein secretion (PubMed:23552949, PubMed:24052263, PubMed:27322069, PubMed:28406396). Has high activity toward long-chain fatty acyl groups and mediates protein-lysine demyristoylation and depalmitoylation of target proteins, such as RRAS2 and TNF, thereby regulating their secretion (PubMed:23552949, PubMed:28406396). Also acts as a mono-ADP-ribosyltransferase by mediating mono-ADP-ribosylation of PARP1, TRIM28/KAP1 or SMARCC2/BAF170 (PubMed:21680843, PubMed:22753495, PubMed:27322069, PubMed:27568560). Mono-ADP-ribosyltransferase activity is involved in DNA repair, cellular senescence, repression of LINE-1 retrotransposon elements and regulation of transcription (PubMed:21680843, PubMed:22753495, PubMed:27568560).</text>
</comment>
<comment type="catalytic activity">
    <reaction evidence="2 7 14 18 22 23 26 28 30 32 34 37 38 39 44 45 46">
        <text>N(6)-acetyl-L-lysyl-[protein] + NAD(+) + H2O = 2''-O-acetyl-ADP-D-ribose + nicotinamide + L-lysyl-[protein]</text>
        <dbReference type="Rhea" id="RHEA:43636"/>
        <dbReference type="Rhea" id="RHEA-COMP:9752"/>
        <dbReference type="Rhea" id="RHEA-COMP:10731"/>
        <dbReference type="ChEBI" id="CHEBI:15377"/>
        <dbReference type="ChEBI" id="CHEBI:17154"/>
        <dbReference type="ChEBI" id="CHEBI:29969"/>
        <dbReference type="ChEBI" id="CHEBI:57540"/>
        <dbReference type="ChEBI" id="CHEBI:61930"/>
        <dbReference type="ChEBI" id="CHEBI:83767"/>
        <dbReference type="EC" id="2.3.1.286"/>
    </reaction>
    <physiologicalReaction direction="left-to-right" evidence="7 14 18 22 23 26 28 30 32 34 37 38 39 44 45 46">
        <dbReference type="Rhea" id="RHEA:43637"/>
    </physiologicalReaction>
</comment>
<comment type="catalytic activity">
    <reaction evidence="16 22 32 38">
        <text>N(6)-tetradecanoyl-L-lysyl-[protein] + NAD(+) + H2O = 2''-O-tetradecanoyl-ADP-D-ribose + nicotinamide + L-lysyl-[protein]</text>
        <dbReference type="Rhea" id="RHEA:70567"/>
        <dbReference type="Rhea" id="RHEA-COMP:9752"/>
        <dbReference type="Rhea" id="RHEA-COMP:15437"/>
        <dbReference type="ChEBI" id="CHEBI:15377"/>
        <dbReference type="ChEBI" id="CHEBI:17154"/>
        <dbReference type="ChEBI" id="CHEBI:29969"/>
        <dbReference type="ChEBI" id="CHEBI:57540"/>
        <dbReference type="ChEBI" id="CHEBI:141129"/>
        <dbReference type="ChEBI" id="CHEBI:189674"/>
    </reaction>
    <physiologicalReaction direction="left-to-right" evidence="16 22 32 38">
        <dbReference type="Rhea" id="RHEA:70568"/>
    </physiologicalReaction>
</comment>
<comment type="catalytic activity">
    <reaction evidence="16 22 32">
        <text>N(6)-hexadecanoyl-L-lysyl-[protein] + NAD(+) + H2O = 2''-O-hexadecanoyl-ADP-D-ribose + nicotinamide + L-lysyl-[protein]</text>
        <dbReference type="Rhea" id="RHEA:70563"/>
        <dbReference type="Rhea" id="RHEA-COMP:9752"/>
        <dbReference type="Rhea" id="RHEA-COMP:14175"/>
        <dbReference type="ChEBI" id="CHEBI:15377"/>
        <dbReference type="ChEBI" id="CHEBI:17154"/>
        <dbReference type="ChEBI" id="CHEBI:29969"/>
        <dbReference type="ChEBI" id="CHEBI:57540"/>
        <dbReference type="ChEBI" id="CHEBI:138936"/>
        <dbReference type="ChEBI" id="CHEBI:189673"/>
    </reaction>
    <physiologicalReaction direction="left-to-right" evidence="16 22 32">
        <dbReference type="Rhea" id="RHEA:70564"/>
    </physiologicalReaction>
</comment>
<comment type="catalytic activity">
    <reaction evidence="11 32 33">
        <text>L-lysyl-[protein] + NAD(+) = N(6)-(ADP-D-ribosyl)-L-lysyl-[protein] + nicotinamide + H(+)</text>
        <dbReference type="Rhea" id="RHEA:58220"/>
        <dbReference type="Rhea" id="RHEA-COMP:9752"/>
        <dbReference type="Rhea" id="RHEA-COMP:15088"/>
        <dbReference type="ChEBI" id="CHEBI:15378"/>
        <dbReference type="ChEBI" id="CHEBI:17154"/>
        <dbReference type="ChEBI" id="CHEBI:29969"/>
        <dbReference type="ChEBI" id="CHEBI:57540"/>
        <dbReference type="ChEBI" id="CHEBI:142515"/>
    </reaction>
    <physiologicalReaction direction="left-to-right" evidence="11 32 33">
        <dbReference type="Rhea" id="RHEA:58221"/>
    </physiologicalReaction>
</comment>
<comment type="catalytic activity">
    <reaction evidence="1">
        <text>L-arginyl-[protein] + NAD(+) = N(omega)-(ADP-D-ribosyl)-L-arginyl-[protein] + nicotinamide + H(+)</text>
        <dbReference type="Rhea" id="RHEA:19149"/>
        <dbReference type="Rhea" id="RHEA-COMP:10532"/>
        <dbReference type="Rhea" id="RHEA-COMP:15087"/>
        <dbReference type="ChEBI" id="CHEBI:15378"/>
        <dbReference type="ChEBI" id="CHEBI:17154"/>
        <dbReference type="ChEBI" id="CHEBI:29965"/>
        <dbReference type="ChEBI" id="CHEBI:57540"/>
        <dbReference type="ChEBI" id="CHEBI:142554"/>
    </reaction>
    <physiologicalReaction direction="left-to-right" evidence="1">
        <dbReference type="Rhea" id="RHEA:19150"/>
    </physiologicalReaction>
</comment>
<comment type="cofactor">
    <cofactor evidence="10 16 35">
        <name>Zn(2+)</name>
        <dbReference type="ChEBI" id="CHEBI:29105"/>
    </cofactor>
    <text evidence="10 16 35">Binds 1 zinc ion per subunit.</text>
</comment>
<comment type="activity regulation">
    <text evidence="10 16 18 22 30 34 35 39 40 41 45 46 47 48 49">Compared to the defatty-acylase activity, the protein deacetylase activity is weak in vitro, and requires activation (PubMed:21362626, PubMed:23552949, PubMed:23892288, PubMed:24052263). The histone deacetylase activity is strongly activated upon binding to nucleosomes and chromatin in vivo (PubMed:23892288, PubMed:27043296, PubMed:33067423). Two molecules of SIRT6 associate with the acidic patch of one nucleosome, while the C-terminal disordered region of SIRT6 associates with nucleosomal DNA, leading to efficient histone deacetylation (PubMed:33067423). The protein-lysine deacetylase activity is also activated by long-chain free fatty-acids (PubMed:24052263). The histone deacetylase activity is specifically repressed by long non-coding RNA lncPRESS1, which binds to SIRT6 and prevents chromatin-binding, thereby promoting stem cell pluripotency (PubMed:27912097). Due to its essential role as tumor suppressor and involvement in DNA repair and life span, extensive research is made for the identification of small compound regulators of SIRT6 (PubMed:27990725, PubMed:30374165, PubMed:30395713, PubMed:31844103, PubMed:33214841, PubMed:33649599, PubMed:33649600). Nitro-fatty acids (nitro-oleic acid and nitro-conjugated linoleic acid) strongly stimulate the protein-lysine deacetylase activity by forming a covalent Michael adduct formation with Cys-18 (PubMed:33122195). Activated by UBCS039 (4-(pyridin-3-yl)-4,5- dihydropyrrolo[1,2-a]quinoxaline) (PubMed:27990725). Inhibited by non-selective hydroxamate trichostatin A inhibitor (PubMed:30395713). Deacetylase activity is activated by fluvastatin and quercetin-based compounds (PubMed:31844103, PubMed:33214841). The protein-lysine deacetylase activity, but not the defatty-acylase activity, is specifically activated by MDL-800 and MDL-801 activators in vivo, enhancing the histone deacetylase and tumor suppressor activities (PubMed:30374165, PubMed:33649599, PubMed:33649600). MDL-800 and MDL-801 selectively activate SIRT6 and not other members of the sirtuin family (PubMed:30374165). The binding-mode of MDL-801 is however subject to discussion (PubMed:30374165, PubMed:33649599, PubMed:33649600).</text>
</comment>
<comment type="biophysicochemical properties">
    <kinetics>
        <KM evidence="16">3.4 uM for N6-tetradecanoyl-L-lysyl-peptide (myristoylated peptide)</KM>
        <KM evidence="16">0.9 uM for N6-hexadecanoyl-L-lysyl-peptide (palmitoylated peptide)</KM>
        <KM evidence="16">2.4 uM for N6-tetradecanoyl-L-lysyl-TNF (TNF myristoylated on 'Lys-19')</KM>
        <KM evidence="16">4.5 uM for N6-tetradecanoyl-L-lysyl-TNF (TNF myristoylated on 'Lys-20')</KM>
        <text evidence="16">kcat is 0.0049 sec(-1) for N6-tetradecanoyl-L-lysyl-peptide (myristoylated peptide) (PubMed:23552949). kcat is 0.0027 sec(-1) for N6-hexadecanoyl-L-lysyl-peptide (palmitoylated peptide) (PubMed:23552949). kcat is 0.0020 sec(-1) for N6-tetradecanoyl-L-lysyl-TNF (TNF myristoylated on 'Lys-19') (PubMed:23552949). kcat is 0.0050 sec(-1) for N6-tetradecanoyl-L-lysyl-TNF (TNF myristoylated on 'Lys-20') (PubMed:23552949).</text>
    </kinetics>
</comment>
<comment type="subunit">
    <text evidence="1 8 19 42 43">Homodimer; binds to nucleosomes and DNA ends as a homodimer (PubMed:31995034, PubMed:32538779). Interacts with RELA; interferes with RELA binding to target DNA (PubMed:19135889). Interacts with SMARCA5; promoting recruitment of SMARCA5/SNF2H to double-strand breaks (DSBs) sites (PubMed:23911928). Interacts with the mTORC2 complex; preventing the ability of SIRT6 to deacetylate FOXO1. Interacts with the CLOCK-BMAL1 complex; recruited by the CLOCK-BMAL1 complex to regulate expression of clock-controlled genes. Interacts with CSNK2A2; preventing CSNK2A2 localization to the nucleus (By similarity).</text>
</comment>
<comment type="subunit">
    <text evidence="50">(Microbial infection) Interacts with Kaposi's sarcoma-associated herpesvirus protein VIRF-1; this interaction prevents SIRT6 deubiquitination by USP10.</text>
</comment>
<comment type="interaction">
    <interactant intactId="EBI-712415">
        <id>Q8N6T7</id>
    </interactant>
    <interactant intactId="EBI-447544">
        <id>P01106</id>
        <label>MYC</label>
    </interactant>
    <organismsDiffer>false</organismsDiffer>
    <experiments>3</experiments>
</comment>
<comment type="interaction">
    <interactant intactId="EBI-712415">
        <id>Q8N6T7</id>
    </interactant>
    <interactant intactId="EBI-73886">
        <id>Q04206</id>
        <label>RELA</label>
    </interactant>
    <organismsDiffer>false</organismsDiffer>
    <experiments>4</experiments>
</comment>
<comment type="subcellular location">
    <subcellularLocation>
        <location evidence="6 7 8 26 29 38">Nucleus</location>
    </subcellularLocation>
    <subcellularLocation>
        <location evidence="11 19 26 30 33 34 42 43 44">Chromosome</location>
    </subcellularLocation>
    <subcellularLocation>
        <location evidence="7">Chromosome</location>
        <location evidence="7">Telomere</location>
    </subcellularLocation>
    <subcellularLocation>
        <location evidence="16">Endoplasmic reticulum</location>
    </subcellularLocation>
    <text evidence="7 11 16 19 30 33 42 43">Predominantly nuclear (PubMed:18337721). Associated with pericentric heterochromatin and telomeric heterochromatin regions (PubMed:18337721, PubMed:27043296). Localizes to DNA damage sites: directly recognizes and binds double-strand breaks (DSBs) sites via a tunnel-like structure that has high affinity for DSBs (PubMed:21680843, PubMed:23911928, PubMed:27568560, PubMed:31995034, PubMed:32538779). A fraction localizes to the endoplasmic reticulum (PubMed:23552949).</text>
</comment>
<comment type="alternative products">
    <event type="alternative splicing"/>
    <isoform>
        <id>Q8N6T7-1</id>
        <name>1</name>
        <sequence type="displayed"/>
    </isoform>
    <isoform>
        <id>Q8N6T7-2</id>
        <name>2</name>
        <sequence type="described" ref="VSP_008733"/>
    </isoform>
</comment>
<comment type="induction">
    <text evidence="15 17 27">Down-regulated in a number of cancers, such as pancreatic cancer or colon carcinomas (PubMed:23217706). Post-transcriptionally regulated by miR-766 (PubMed:23653361). Expression is post-transcriptionally repressed by miR-122 (PubMed:26748705).</text>
</comment>
<comment type="domain">
    <text evidence="45">The C-terminal disordered region mediates non-specific DNA-binding.</text>
</comment>
<comment type="PTM">
    <text evidence="43">Acetylated at Lys-33 (PubMed:32538779). Deacetylation at Lys-33 by SIRT1 promotes homomultimerization and binding to double-strand breaks (DSBs) sites (PubMed:32538779).</text>
</comment>
<comment type="PTM">
    <text evidence="33">Phosphorylation at Ser-10 by MAPK8/JNK1 in response to oxidative stress stimulates the mono-ADP-ribosyltransferase activity on PARP1, leading to PARP1 recruitment to double-strand breaks (DSBs).</text>
</comment>
<comment type="PTM">
    <text evidence="21 50">Monoubiquitinated at Lys-170 by STUB1/CHIP, preventing its degradation by the proteasome. Deubiquitinated by USP10, also preventing its degradation by the proteasome (PubMed:37023208).</text>
</comment>
<comment type="PTM">
    <text evidence="29">Sumoylated, leading to specifically decrease ability to deacetylate histone H3 at 'Lys-56' (H3K56ac).</text>
</comment>
<comment type="polymorphism">
    <text evidence="24">Variability among SIRT6 alleles may account for variations in life span (PubMed:25541994). A minor allele (rs107251) is associated with a decreased life span of 5.5 and 5.9 years when homozygous (TT); when compared to the major allele homozygous (CC) and heterozygous (CT) genotypes, respectively (PubMed:25541994).</text>
</comment>
<comment type="similarity">
    <text evidence="55">Belongs to the sirtuin family. Class IV subfamily.</text>
</comment>
<comment type="caution">
    <text evidence="56 62">Upon DNA damage, was reported to promote DNA end resection via deacetylation of RBBP8. However, this study was later retracted.</text>
</comment>
<comment type="caution">
    <text evidence="39 48 49">The binding-mode of MDL-801 selective activator is subject to discussion (PubMed:30374165, PubMed:33649599, PubMed:33649600). According to a group, MDL-801 binds around the acyl channel exit and acts as an allosteric activator (PubMed:30374165, PubMed:33649600). According to another group, the binding mode of MDL-801 remains undefined (PubMed:33649599).</text>
</comment>
<comment type="sequence caution" evidence="55">
    <conflict type="erroneous gene model prediction">
        <sequence resource="EMBL-CDS" id="AAC34468"/>
    </conflict>
</comment>
<comment type="sequence caution" evidence="55">
    <conflict type="erroneous gene model prediction">
        <sequence resource="EMBL-CDS" id="AAD15478"/>
    </conflict>
</comment>
<comment type="sequence caution" evidence="55">
    <conflict type="erroneous translation">
        <sequence resource="EMBL-CDS" id="AAH04218"/>
    </conflict>
    <text>Wrong choice of CCDS.</text>
</comment>
<evidence type="ECO:0000250" key="1">
    <source>
        <dbReference type="UniProtKB" id="P59941"/>
    </source>
</evidence>
<evidence type="ECO:0000255" key="2">
    <source>
        <dbReference type="PROSITE-ProRule" id="PRU00236"/>
    </source>
</evidence>
<evidence type="ECO:0000256" key="3">
    <source>
        <dbReference type="SAM" id="MobiDB-lite"/>
    </source>
</evidence>
<evidence type="ECO:0000269" key="4">
    <source>
    </source>
</evidence>
<evidence type="ECO:0000269" key="5">
    <source>
    </source>
</evidence>
<evidence type="ECO:0000269" key="6">
    <source>
    </source>
</evidence>
<evidence type="ECO:0000269" key="7">
    <source>
    </source>
</evidence>
<evidence type="ECO:0000269" key="8">
    <source>
    </source>
</evidence>
<evidence type="ECO:0000269" key="9">
    <source>
    </source>
</evidence>
<evidence type="ECO:0000269" key="10">
    <source>
    </source>
</evidence>
<evidence type="ECO:0000269" key="11">
    <source>
    </source>
</evidence>
<evidence type="ECO:0000269" key="12">
    <source>
    </source>
</evidence>
<evidence type="ECO:0000269" key="13">
    <source>
    </source>
</evidence>
<evidence type="ECO:0000269" key="14">
    <source>
    </source>
</evidence>
<evidence type="ECO:0000269" key="15">
    <source>
    </source>
</evidence>
<evidence type="ECO:0000269" key="16">
    <source>
    </source>
</evidence>
<evidence type="ECO:0000269" key="17">
    <source>
    </source>
</evidence>
<evidence type="ECO:0000269" key="18">
    <source>
    </source>
</evidence>
<evidence type="ECO:0000269" key="19">
    <source>
    </source>
</evidence>
<evidence type="ECO:0000269" key="20">
    <source>
    </source>
</evidence>
<evidence type="ECO:0000269" key="21">
    <source>
    </source>
</evidence>
<evidence type="ECO:0000269" key="22">
    <source>
    </source>
</evidence>
<evidence type="ECO:0000269" key="23">
    <source>
    </source>
</evidence>
<evidence type="ECO:0000269" key="24">
    <source>
    </source>
</evidence>
<evidence type="ECO:0000269" key="25">
    <source>
    </source>
</evidence>
<evidence type="ECO:0000269" key="26">
    <source>
    </source>
</evidence>
<evidence type="ECO:0000269" key="27">
    <source>
    </source>
</evidence>
<evidence type="ECO:0000269" key="28">
    <source>
    </source>
</evidence>
<evidence type="ECO:0000269" key="29">
    <source>
    </source>
</evidence>
<evidence type="ECO:0000269" key="30">
    <source>
    </source>
</evidence>
<evidence type="ECO:0000269" key="31">
    <source>
    </source>
</evidence>
<evidence type="ECO:0000269" key="32">
    <source>
    </source>
</evidence>
<evidence type="ECO:0000269" key="33">
    <source>
    </source>
</evidence>
<evidence type="ECO:0000269" key="34">
    <source>
    </source>
</evidence>
<evidence type="ECO:0000269" key="35">
    <source>
    </source>
</evidence>
<evidence type="ECO:0000269" key="36">
    <source>
    </source>
</evidence>
<evidence type="ECO:0000269" key="37">
    <source>
    </source>
</evidence>
<evidence type="ECO:0000269" key="38">
    <source>
    </source>
</evidence>
<evidence type="ECO:0000269" key="39">
    <source>
    </source>
</evidence>
<evidence type="ECO:0000269" key="40">
    <source>
    </source>
</evidence>
<evidence type="ECO:0000269" key="41">
    <source>
    </source>
</evidence>
<evidence type="ECO:0000269" key="42">
    <source>
    </source>
</evidence>
<evidence type="ECO:0000269" key="43">
    <source>
    </source>
</evidence>
<evidence type="ECO:0000269" key="44">
    <source>
    </source>
</evidence>
<evidence type="ECO:0000269" key="45">
    <source>
    </source>
</evidence>
<evidence type="ECO:0000269" key="46">
    <source>
    </source>
</evidence>
<evidence type="ECO:0000269" key="47">
    <source>
    </source>
</evidence>
<evidence type="ECO:0000269" key="48">
    <source>
    </source>
</evidence>
<evidence type="ECO:0000269" key="49">
    <source>
    </source>
</evidence>
<evidence type="ECO:0000269" key="50">
    <source>
    </source>
</evidence>
<evidence type="ECO:0000269" key="51">
    <source ref="5"/>
</evidence>
<evidence type="ECO:0000303" key="52">
    <source>
    </source>
</evidence>
<evidence type="ECO:0000303" key="53">
    <source>
    </source>
</evidence>
<evidence type="ECO:0000303" key="54">
    <source>
    </source>
</evidence>
<evidence type="ECO:0000305" key="55"/>
<evidence type="ECO:0000305" key="56">
    <source>
    </source>
</evidence>
<evidence type="ECO:0000305" key="57">
    <source>
    </source>
</evidence>
<evidence type="ECO:0000305" key="58">
    <source>
    </source>
</evidence>
<evidence type="ECO:0000305" key="59">
    <source>
    </source>
</evidence>
<evidence type="ECO:0000305" key="60">
    <source>
    </source>
</evidence>
<evidence type="ECO:0000305" key="61">
    <source>
    </source>
</evidence>
<evidence type="ECO:0000305" key="62">
    <source>
    </source>
</evidence>
<evidence type="ECO:0000312" key="63">
    <source>
        <dbReference type="HGNC" id="HGNC:14934"/>
    </source>
</evidence>
<evidence type="ECO:0007744" key="64">
    <source>
        <dbReference type="PDB" id="3K35"/>
    </source>
</evidence>
<evidence type="ECO:0007744" key="65">
    <source>
        <dbReference type="PDB" id="3PKI"/>
    </source>
</evidence>
<evidence type="ECO:0007744" key="66">
    <source>
        <dbReference type="PDB" id="3PKJ"/>
    </source>
</evidence>
<evidence type="ECO:0007744" key="67">
    <source>
        <dbReference type="PDB" id="3ZG6"/>
    </source>
</evidence>
<evidence type="ECO:0007744" key="68">
    <source>
        <dbReference type="PDB" id="5MF6"/>
    </source>
</evidence>
<evidence type="ECO:0007744" key="69">
    <source>
        <dbReference type="PDB" id="5MFP"/>
    </source>
</evidence>
<evidence type="ECO:0007744" key="70">
    <source>
        <dbReference type="PDB" id="5MFZ"/>
    </source>
</evidence>
<evidence type="ECO:0007744" key="71">
    <source>
        <dbReference type="PDB" id="5MGN"/>
    </source>
</evidence>
<evidence type="ECO:0007744" key="72">
    <source>
        <dbReference type="PDB" id="5X16"/>
    </source>
</evidence>
<evidence type="ECO:0007744" key="73">
    <source>
        <dbReference type="PDB" id="5Y2F"/>
    </source>
</evidence>
<evidence type="ECO:0007744" key="74">
    <source>
        <dbReference type="PDB" id="6HOY"/>
    </source>
</evidence>
<evidence type="ECO:0007744" key="75">
    <source>
        <dbReference type="PDB" id="6QCD"/>
    </source>
</evidence>
<evidence type="ECO:0007744" key="76">
    <source>
        <dbReference type="PDB" id="6QCE"/>
    </source>
</evidence>
<evidence type="ECO:0007744" key="77">
    <source>
        <dbReference type="PDB" id="6QCH"/>
    </source>
</evidence>
<evidence type="ECO:0007744" key="78">
    <source>
        <dbReference type="PDB" id="6QCJ"/>
    </source>
</evidence>
<evidence type="ECO:0007744" key="79">
    <source>
        <dbReference type="PDB" id="6XUY"/>
    </source>
</evidence>
<evidence type="ECO:0007744" key="80">
    <source>
        <dbReference type="PDB" id="6XV1"/>
    </source>
</evidence>
<evidence type="ECO:0007744" key="81">
    <source>
        <dbReference type="PDB" id="6XV6"/>
    </source>
</evidence>
<evidence type="ECO:0007744" key="82">
    <source>
        <dbReference type="PDB" id="6XVG"/>
    </source>
</evidence>
<evidence type="ECO:0007744" key="83">
    <source>
        <dbReference type="PDB" id="6ZU4"/>
    </source>
</evidence>
<evidence type="ECO:0007744" key="84">
    <source>
        <dbReference type="PDB" id="7CL0"/>
    </source>
</evidence>
<evidence type="ECO:0007744" key="85">
    <source>
        <dbReference type="PDB" id="7CL1"/>
    </source>
</evidence>
<evidence type="ECO:0007744" key="86">
    <source>
    </source>
</evidence>
<evidence type="ECO:0007744" key="87">
    <source>
    </source>
</evidence>
<evidence type="ECO:0007744" key="88">
    <source>
    </source>
</evidence>
<evidence type="ECO:0007744" key="89">
    <source>
    </source>
</evidence>
<evidence type="ECO:0007829" key="90">
    <source>
        <dbReference type="PDB" id="3PKJ"/>
    </source>
</evidence>
<evidence type="ECO:0007829" key="91">
    <source>
        <dbReference type="PDB" id="5X16"/>
    </source>
</evidence>
<evidence type="ECO:0007829" key="92">
    <source>
        <dbReference type="PDB" id="6HOY"/>
    </source>
</evidence>
<evidence type="ECO:0007829" key="93">
    <source>
        <dbReference type="PDB" id="6XV1"/>
    </source>
</evidence>
<evidence type="ECO:0007829" key="94">
    <source>
        <dbReference type="PDB" id="6XV6"/>
    </source>
</evidence>
<evidence type="ECO:0007829" key="95">
    <source>
        <dbReference type="PDB" id="8BL0"/>
    </source>
</evidence>
<evidence type="ECO:0007829" key="96">
    <source>
        <dbReference type="PDB" id="8F86"/>
    </source>
</evidence>
<accession>Q8N6T7</accession>
<accession>B2RCD0</accession>
<accession>O75291</accession>
<accession>Q6IAF5</accession>
<accession>Q6PK99</accession>
<accession>Q8NCD2</accession>
<accession>Q9BSI5</accession>
<accession>Q9BWP3</accession>
<accession>Q9NRC7</accession>
<accession>Q9UQD1</accession>
<feature type="initiator methionine" description="Removed" evidence="87">
    <location>
        <position position="1"/>
    </location>
</feature>
<feature type="chain" id="PRO_0000110269" description="NAD-dependent protein deacylase sirtuin-6">
    <location>
        <begin position="2"/>
        <end position="355"/>
    </location>
</feature>
<feature type="domain" description="Deacetylase sirtuin-type" evidence="2">
    <location>
        <begin position="27"/>
        <end position="272"/>
    </location>
</feature>
<feature type="region of interest" description="Disordered" evidence="45">
    <location>
        <begin position="284"/>
        <end position="355"/>
    </location>
</feature>
<feature type="compositionally biased region" description="Pro residues" evidence="3">
    <location>
        <begin position="287"/>
        <end position="296"/>
    </location>
</feature>
<feature type="compositionally biased region" description="Basic residues" evidence="3">
    <location>
        <begin position="343"/>
        <end position="355"/>
    </location>
</feature>
<feature type="active site" description="Proton acceptor" evidence="2 7 58 59 60 61">
    <location>
        <position position="133"/>
    </location>
</feature>
<feature type="binding site" evidence="57 64 67">
    <location>
        <position position="53"/>
    </location>
    <ligand>
        <name>NAD(+)</name>
        <dbReference type="ChEBI" id="CHEBI:57540"/>
    </ligand>
</feature>
<feature type="binding site" evidence="16 57 64 67">
    <location>
        <position position="57"/>
    </location>
    <ligand>
        <name>NAD(+)</name>
        <dbReference type="ChEBI" id="CHEBI:57540"/>
    </ligand>
</feature>
<feature type="binding site" evidence="16 57 64 67">
    <location>
        <position position="64"/>
    </location>
    <ligand>
        <name>NAD(+)</name>
        <dbReference type="ChEBI" id="CHEBI:57540"/>
    </ligand>
</feature>
<feature type="binding site" evidence="16 57 64 67">
    <location>
        <position position="65"/>
    </location>
    <ligand>
        <name>NAD(+)</name>
        <dbReference type="ChEBI" id="CHEBI:57540"/>
    </ligand>
</feature>
<feature type="binding site" evidence="16 57 64 67">
    <location>
        <position position="71"/>
    </location>
    <ligand>
        <name>NAD(+)</name>
        <dbReference type="ChEBI" id="CHEBI:57540"/>
    </ligand>
</feature>
<feature type="binding site" evidence="16 57 64 67">
    <location>
        <position position="113"/>
    </location>
    <ligand>
        <name>NAD(+)</name>
        <dbReference type="ChEBI" id="CHEBI:57540"/>
    </ligand>
</feature>
<feature type="binding site" evidence="16 57 64 67">
    <location>
        <position position="133"/>
    </location>
    <ligand>
        <name>NAD(+)</name>
        <dbReference type="ChEBI" id="CHEBI:57540"/>
    </ligand>
</feature>
<feature type="binding site" evidence="2 10 16 35 64 65 66 67 68 69 70 71">
    <location>
        <position position="141"/>
    </location>
    <ligand>
        <name>Zn(2+)</name>
        <dbReference type="ChEBI" id="CHEBI:29105"/>
    </ligand>
</feature>
<feature type="binding site" evidence="2 10 16 35 64 65 66 67 68 69 70 71">
    <location>
        <position position="144"/>
    </location>
    <ligand>
        <name>Zn(2+)</name>
        <dbReference type="ChEBI" id="CHEBI:29105"/>
    </ligand>
</feature>
<feature type="binding site" evidence="2 10 16 35 64 65 66 67 68 69 70 71">
    <location>
        <position position="166"/>
    </location>
    <ligand>
        <name>Zn(2+)</name>
        <dbReference type="ChEBI" id="CHEBI:29105"/>
    </ligand>
</feature>
<feature type="binding site" evidence="2 10 16 35 64 65 66 67 68 69 70 71">
    <location>
        <position position="177"/>
    </location>
    <ligand>
        <name>Zn(2+)</name>
        <dbReference type="ChEBI" id="CHEBI:29105"/>
    </ligand>
</feature>
<feature type="binding site" evidence="16 57 64 67">
    <location>
        <position position="214"/>
    </location>
    <ligand>
        <name>NAD(+)</name>
        <dbReference type="ChEBI" id="CHEBI:57540"/>
    </ligand>
</feature>
<feature type="binding site" evidence="16 57 64 67">
    <location>
        <position position="216"/>
    </location>
    <ligand>
        <name>NAD(+)</name>
        <dbReference type="ChEBI" id="CHEBI:57540"/>
    </ligand>
</feature>
<feature type="binding site" evidence="16 57 64 67">
    <location>
        <position position="240"/>
    </location>
    <ligand>
        <name>NAD(+)</name>
        <dbReference type="ChEBI" id="CHEBI:57540"/>
    </ligand>
</feature>
<feature type="binding site" evidence="16 57 64 67">
    <location>
        <position position="242"/>
    </location>
    <ligand>
        <name>NAD(+)</name>
        <dbReference type="ChEBI" id="CHEBI:57540"/>
    </ligand>
</feature>
<feature type="binding site" evidence="16 57 64 67">
    <location>
        <position position="258"/>
    </location>
    <ligand>
        <name>NAD(+)</name>
        <dbReference type="ChEBI" id="CHEBI:57540"/>
    </ligand>
</feature>
<feature type="site" description="Formation of an covalent adduct with nitro-fatty acid activators" evidence="46">
    <location>
        <position position="18"/>
    </location>
</feature>
<feature type="modified residue" description="N-acetylserine" evidence="87">
    <location>
        <position position="2"/>
    </location>
</feature>
<feature type="modified residue" description="Phosphoserine; by MAPK8" evidence="33 88">
    <location>
        <position position="10"/>
    </location>
</feature>
<feature type="modified residue" description="N6-acetyllysine" evidence="43">
    <location>
        <position position="33"/>
    </location>
</feature>
<feature type="modified residue" description="Phosphothreonine" evidence="89">
    <location>
        <position position="294"/>
    </location>
</feature>
<feature type="modified residue" description="Phosphoserine" evidence="86 88">
    <location>
        <position position="303"/>
    </location>
</feature>
<feature type="modified residue" description="Phosphoserine" evidence="88">
    <location>
        <position position="330"/>
    </location>
</feature>
<feature type="cross-link" description="Glycyl lysine isopeptide (Lys-Gly) (interchain with G-Cter in ubiquitin)" evidence="21">
    <location>
        <position position="170"/>
    </location>
</feature>
<feature type="splice variant" id="VSP_008733" description="In isoform 2." evidence="53">
    <location>
        <begin position="179"/>
        <end position="205"/>
    </location>
</feature>
<feature type="sequence variant" id="VAR_086083" description="Found in non-small cell lung cancer; somatic mutation; reduced localization to chromatin; reduced histone deacetylase activity; does not affect the protein-lysine demyristoylase activity; dbSNP:rs752121167." evidence="26">
    <original>D</original>
    <variation>N</variation>
    <location>
        <position position="25"/>
    </location>
</feature>
<feature type="sequence variant" id="VAR_086084" description="Found in kidney cancer; somatic mutation; reduced histone deacetylase activity; does not affect the protein-lysine demyristoylase activity." evidence="26">
    <original>E</original>
    <variation>V</variation>
    <location>
        <position position="36"/>
    </location>
</feature>
<feature type="sequence variant" id="VAR_017154" description="Does not affect histone deacetylase activity; dbSNP:rs352493." evidence="4 5 26 51">
    <original>S</original>
    <variation>N</variation>
    <location>
        <position position="46"/>
    </location>
</feature>
<feature type="sequence variant" id="VAR_086085" description="Found in a family presenting with four cases of perinatal lethality caused by severe neurodevelopmental and cardiac anomalies; uncertain significance; abolished histone deacetylase activity; abolished protein demyristoylase activity; decreased ability to recognize and bind double-strand breaks (DSBs) sites; does not affect nuclear localization; dbSNP:rs779174928." evidence="38 42">
    <original>D</original>
    <variation>H</variation>
    <location>
        <position position="63"/>
    </location>
</feature>
<feature type="sequence variant" id="VAR_086086" description="Found in non-small cell lung cancer; somatic mutation; does not affect ability to recognize and bind double-strand breaks (DSBs) sites; strongly reduced histone deacetylase activity; strongly reduced the protein-lysine demyristoylase activity." evidence="26 42">
    <original>D</original>
    <variation>Y</variation>
    <location>
        <position position="63"/>
    </location>
</feature>
<feature type="sequence variant" id="VAR_086087" description="Found in non-small cell lung cancer; somatic mutation; reduced histone deacetylase activity; does not affect the protein-lysine demyristoylase activity." evidence="26">
    <original>A</original>
    <variation>S</variation>
    <location>
        <position position="89"/>
    </location>
</feature>
<feature type="sequence variant" id="VAR_086088" description="Found in non-small cell lung cancer; somatic mutation; reduced localization to chromatin; strongly reduced histone deacetylase activity; strongly reduced the protein-lysine demyristoylase activity; dbSNP:rs964309225." evidence="26">
    <original>D</original>
    <variation>N</variation>
    <location>
        <position position="116"/>
    </location>
</feature>
<feature type="sequence variant" id="VAR_086089" description="Found in non-small cell lung cancer; somatic mutation; reduced localization to chromatin." evidence="26">
    <location>
        <begin position="260"/>
        <end position="355"/>
    </location>
</feature>
<feature type="sequence variant" id="VAR_086090" description="Found in cervical cancer; somatic mutation; reduced histone deacetylase activity; slightly reduced the protein-lysine demyristoylase activity; dbSNP:rs1259485520." evidence="26">
    <original>T</original>
    <variation>P</variation>
    <location>
        <position position="263"/>
    </location>
</feature>
<feature type="sequence variant" id="VAR_086091" description="Found in melanoma; somatic mutation; reduced histone deacetylase activity; does not affect the protein-lysine demyristoylase activity." evidence="26">
    <original>P</original>
    <variation>L</variation>
    <location>
        <position position="274"/>
    </location>
</feature>
<feature type="mutagenesis site" description="Abolishes ability to promote DNA repair and recruit PARP1 to double-strand breaks (DSBs)." evidence="33">
    <original>S</original>
    <variation>A</variation>
    <location>
        <position position="10"/>
    </location>
</feature>
<feature type="mutagenesis site" description="Mimics phosphorylation; increased ability to promote DNA repair and recruit PARP1 to double-strand breaks (DSBs)." evidence="33">
    <original>S</original>
    <variation>E</variation>
    <location>
        <position position="10"/>
    </location>
</feature>
<feature type="mutagenesis site" description="Increased protein-lysine demyristoylase activity." evidence="42">
    <original>A</original>
    <variation>W</variation>
    <location>
        <position position="13"/>
    </location>
</feature>
<feature type="mutagenesis site" description="Does not affect acetylation level." evidence="43">
    <original>K</original>
    <variation>R</variation>
    <location>
        <position position="15"/>
    </location>
</feature>
<feature type="mutagenesis site" description="Does not affect acetylation level." evidence="43">
    <original>K</original>
    <variation>R</variation>
    <location>
        <position position="17"/>
    </location>
</feature>
<feature type="mutagenesis site" description="Mimics acetylation, leading to impaired ability to recognize and bind double-strand breaks (DSBs) sites." evidence="43">
    <original>K</original>
    <variation>Q</variation>
    <location>
        <position position="33"/>
    </location>
</feature>
<feature type="mutagenesis site" description="Decreased acetylation level." evidence="43">
    <original>K</original>
    <variation>R</variation>
    <location>
        <position position="33"/>
    </location>
</feature>
<feature type="mutagenesis site" description="In AAA mutant; strongly decreased nucleosome-binding; when associated with 206-A--A-208." evidence="45">
    <original>S</original>
    <variation>A</variation>
    <location>
        <position position="45"/>
    </location>
</feature>
<feature type="mutagenesis site" description="Abolished NAD-dependent protein deacetylase, defatty-acylase and mono-ADP-ribosyltransferase activities." evidence="11 13 32 44">
    <original>S</original>
    <variation>Y</variation>
    <location>
        <position position="56"/>
    </location>
</feature>
<feature type="mutagenesis site" description="Does not affect the NAD-dependent protein defatty-acylase activity. Abolished NAD-dependent protein deacetylase and mono-ADP-ribosyltransferase activities." evidence="11 13 32 36">
    <original>G</original>
    <variation>A</variation>
    <location>
        <position position="60"/>
    </location>
</feature>
<feature type="mutagenesis site" description="Does not affect the mono-ADP-ribosyltransferase activity. Abolished NAD-dependent protein deacetylase and defatty-acylase activities." evidence="11 13 32">
    <original>R</original>
    <variation>A</variation>
    <location>
        <position position="65"/>
    </location>
</feature>
<feature type="mutagenesis site" description="Reduced MDL-800 and MDL-801 compounds-binding." evidence="39">
    <original>F</original>
    <variation>A</variation>
    <variation>E</variation>
    <location>
        <position position="82"/>
    </location>
</feature>
<feature type="mutagenesis site" description="Strongly reduced MDL-800 and MDL-801 compounds-binding." evidence="39">
    <original>F</original>
    <variation>E</variation>
    <location>
        <position position="86"/>
    </location>
</feature>
<feature type="mutagenesis site" description="Slightly reduced MDL-800 and MDL-801 compounds-binding." evidence="39">
    <original>F</original>
    <variation>Q</variation>
    <location>
        <position position="86"/>
    </location>
</feature>
<feature type="mutagenesis site" description="Abolished NAD-dependent protein deacetylase, deacylase and mono-ADP-ribosyltransferase activities. Impaired ability to recognize and bind double-strand breaks (DSBs) sites." evidence="7 14 16 18 19 28 30 32 36 37 42 43 44">
    <original>H</original>
    <variation>Y</variation>
    <location>
        <position position="133"/>
    </location>
</feature>
<feature type="mutagenesis site" description="Decreased ubiquitination." evidence="21">
    <original>K</original>
    <variation>R</variation>
    <location>
        <position position="170"/>
    </location>
</feature>
<feature type="mutagenesis site" description="In AAA mutant; strongly decreased nucleosome-binding; when associated with A-45." evidence="45">
    <location>
        <begin position="206"/>
        <end position="208"/>
    </location>
</feature>
<feature type="mutagenesis site" description="Does not affect ability to promote DNA repair." evidence="33">
    <original>T</original>
    <variation>A</variation>
    <location>
        <position position="294"/>
    </location>
</feature>
<feature type="mutagenesis site" description="In 4KR mutant; abolished sumoylation, leading to increased H3K56ac; when associated with R-316 and R-332." evidence="29">
    <original>KLEPK</original>
    <variation>RLEPR</variation>
    <location>
        <begin position="296"/>
        <end position="300"/>
    </location>
</feature>
<feature type="mutagenesis site" description="Does not affect ability to promote DNA repair." evidence="33">
    <original>S</original>
    <variation>A</variation>
    <location>
        <position position="303"/>
    </location>
</feature>
<feature type="mutagenesis site" description="In 4KR mutant; abolished sumoylation, leading to increased H3K56ac; when associated with 296-R--R-300 and R-332." evidence="29">
    <original>K</original>
    <variation>R</variation>
    <location>
        <position position="316"/>
    </location>
</feature>
<feature type="mutagenesis site" description="Does not affect ability to promote DNA repair." evidence="33">
    <original>S</original>
    <variation>A</variation>
    <location>
        <position position="330"/>
    </location>
</feature>
<feature type="mutagenesis site" description="In 4KR mutant; abolished sumoylation, leading to increased H3K56ac; when associated with 296-R--R-300 and R-316." evidence="29">
    <original>K</original>
    <variation>R</variation>
    <location>
        <position position="332"/>
    </location>
</feature>
<feature type="mutagenesis site" description="Does not affect ability to promote DNA repair." evidence="33">
    <original>S</original>
    <variation>A</variation>
    <location>
        <position position="338"/>
    </location>
</feature>
<feature type="sequence conflict" description="In Ref. 3; CAG33481." evidence="55" ref="3">
    <original>W</original>
    <variation>R</variation>
    <location>
        <position position="42"/>
    </location>
</feature>
<feature type="sequence conflict" description="In Ref. 6; AAH04218." evidence="55" ref="6">
    <original>H</original>
    <variation>Y</variation>
    <location>
        <position position="249"/>
    </location>
</feature>
<feature type="sequence conflict" description="In Ref. 1; AAF43432." evidence="55" ref="1">
    <original>K</original>
    <variation>E</variation>
    <location>
        <position position="267"/>
    </location>
</feature>
<feature type="helix" evidence="94">
    <location>
        <begin position="5"/>
        <end position="9"/>
    </location>
</feature>
<feature type="turn" evidence="94">
    <location>
        <begin position="10"/>
        <end position="12"/>
    </location>
</feature>
<feature type="helix" evidence="92">
    <location>
        <begin position="27"/>
        <end position="43"/>
    </location>
</feature>
<feature type="strand" evidence="92">
    <location>
        <begin position="45"/>
        <end position="51"/>
    </location>
</feature>
<feature type="helix" evidence="92">
    <location>
        <begin position="53"/>
        <end position="55"/>
    </location>
</feature>
<feature type="helix" evidence="92">
    <location>
        <begin position="57"/>
        <end position="59"/>
    </location>
</feature>
<feature type="strand" evidence="92">
    <location>
        <begin position="64"/>
        <end position="66"/>
    </location>
</feature>
<feature type="helix" evidence="92">
    <location>
        <begin position="70"/>
        <end position="75"/>
    </location>
</feature>
<feature type="strand" evidence="96">
    <location>
        <begin position="76"/>
        <end position="78"/>
    </location>
</feature>
<feature type="turn" evidence="92">
    <location>
        <begin position="86"/>
        <end position="88"/>
    </location>
</feature>
<feature type="helix" evidence="92">
    <location>
        <begin position="93"/>
        <end position="103"/>
    </location>
</feature>
<feature type="strand" evidence="92">
    <location>
        <begin position="108"/>
        <end position="112"/>
    </location>
</feature>
<feature type="helix" evidence="92">
    <location>
        <begin position="118"/>
        <end position="121"/>
    </location>
</feature>
<feature type="strand" evidence="95">
    <location>
        <begin position="122"/>
        <end position="125"/>
    </location>
</feature>
<feature type="helix" evidence="92">
    <location>
        <begin position="126"/>
        <end position="128"/>
    </location>
</feature>
<feature type="strand" evidence="92">
    <location>
        <begin position="129"/>
        <end position="131"/>
    </location>
</feature>
<feature type="strand" evidence="92">
    <location>
        <begin position="138"/>
        <end position="141"/>
    </location>
</feature>
<feature type="turn" evidence="92">
    <location>
        <begin position="142"/>
        <end position="144"/>
    </location>
</feature>
<feature type="strand" evidence="92">
    <location>
        <begin position="147"/>
        <end position="149"/>
    </location>
</feature>
<feature type="strand" evidence="92">
    <location>
        <begin position="161"/>
        <end position="165"/>
    </location>
</feature>
<feature type="turn" evidence="91">
    <location>
        <begin position="171"/>
        <end position="174"/>
    </location>
</feature>
<feature type="strand" evidence="92">
    <location>
        <begin position="180"/>
        <end position="183"/>
    </location>
</feature>
<feature type="strand" evidence="90">
    <location>
        <begin position="188"/>
        <end position="190"/>
    </location>
</feature>
<feature type="helix" evidence="92">
    <location>
        <begin position="194"/>
        <end position="206"/>
    </location>
</feature>
<feature type="strand" evidence="92">
    <location>
        <begin position="208"/>
        <end position="214"/>
    </location>
</feature>
<feature type="helix" evidence="92">
    <location>
        <begin position="222"/>
        <end position="224"/>
    </location>
</feature>
<feature type="helix" evidence="92">
    <location>
        <begin position="225"/>
        <end position="228"/>
    </location>
</feature>
<feature type="helix" evidence="92">
    <location>
        <begin position="229"/>
        <end position="233"/>
    </location>
</feature>
<feature type="strand" evidence="92">
    <location>
        <begin position="235"/>
        <end position="239"/>
    </location>
</feature>
<feature type="helix" evidence="92">
    <location>
        <begin position="247"/>
        <end position="249"/>
    </location>
</feature>
<feature type="strand" evidence="92">
    <location>
        <begin position="251"/>
        <end position="254"/>
    </location>
</feature>
<feature type="helix" evidence="92">
    <location>
        <begin position="258"/>
        <end position="269"/>
    </location>
</feature>
<feature type="strand" evidence="92">
    <location>
        <begin position="278"/>
        <end position="280"/>
    </location>
</feature>
<feature type="strand" evidence="93">
    <location>
        <begin position="282"/>
        <end position="284"/>
    </location>
</feature>
<reference key="1">
    <citation type="journal article" date="2000" name="Biochem. Biophys. Res. Commun.">
        <title>Phylogenetic classification of prokaryotic and eukaryotic Sir-2 like proteins.</title>
        <authorList>
            <person name="Frye R.A."/>
        </authorList>
    </citation>
    <scope>NUCLEOTIDE SEQUENCE [MRNA] (ISOFORM 1)</scope>
    <source>
        <tissue>Spleen</tissue>
    </source>
</reference>
<reference key="2">
    <citation type="journal article" date="2004" name="Nat. Genet.">
        <title>Complete sequencing and characterization of 21,243 full-length human cDNAs.</title>
        <authorList>
            <person name="Ota T."/>
            <person name="Suzuki Y."/>
            <person name="Nishikawa T."/>
            <person name="Otsuki T."/>
            <person name="Sugiyama T."/>
            <person name="Irie R."/>
            <person name="Wakamatsu A."/>
            <person name="Hayashi K."/>
            <person name="Sato H."/>
            <person name="Nagai K."/>
            <person name="Kimura K."/>
            <person name="Makita H."/>
            <person name="Sekine M."/>
            <person name="Obayashi M."/>
            <person name="Nishi T."/>
            <person name="Shibahara T."/>
            <person name="Tanaka T."/>
            <person name="Ishii S."/>
            <person name="Yamamoto J."/>
            <person name="Saito K."/>
            <person name="Kawai Y."/>
            <person name="Isono Y."/>
            <person name="Nakamura Y."/>
            <person name="Nagahari K."/>
            <person name="Murakami K."/>
            <person name="Yasuda T."/>
            <person name="Iwayanagi T."/>
            <person name="Wagatsuma M."/>
            <person name="Shiratori A."/>
            <person name="Sudo H."/>
            <person name="Hosoiri T."/>
            <person name="Kaku Y."/>
            <person name="Kodaira H."/>
            <person name="Kondo H."/>
            <person name="Sugawara M."/>
            <person name="Takahashi M."/>
            <person name="Kanda K."/>
            <person name="Yokoi T."/>
            <person name="Furuya T."/>
            <person name="Kikkawa E."/>
            <person name="Omura Y."/>
            <person name="Abe K."/>
            <person name="Kamihara K."/>
            <person name="Katsuta N."/>
            <person name="Sato K."/>
            <person name="Tanikawa M."/>
            <person name="Yamazaki M."/>
            <person name="Ninomiya K."/>
            <person name="Ishibashi T."/>
            <person name="Yamashita H."/>
            <person name="Murakawa K."/>
            <person name="Fujimori K."/>
            <person name="Tanai H."/>
            <person name="Kimata M."/>
            <person name="Watanabe M."/>
            <person name="Hiraoka S."/>
            <person name="Chiba Y."/>
            <person name="Ishida S."/>
            <person name="Ono Y."/>
            <person name="Takiguchi S."/>
            <person name="Watanabe S."/>
            <person name="Yosida M."/>
            <person name="Hotuta T."/>
            <person name="Kusano J."/>
            <person name="Kanehori K."/>
            <person name="Takahashi-Fujii A."/>
            <person name="Hara H."/>
            <person name="Tanase T.-O."/>
            <person name="Nomura Y."/>
            <person name="Togiya S."/>
            <person name="Komai F."/>
            <person name="Hara R."/>
            <person name="Takeuchi K."/>
            <person name="Arita M."/>
            <person name="Imose N."/>
            <person name="Musashino K."/>
            <person name="Yuuki H."/>
            <person name="Oshima A."/>
            <person name="Sasaki N."/>
            <person name="Aotsuka S."/>
            <person name="Yoshikawa Y."/>
            <person name="Matsunawa H."/>
            <person name="Ichihara T."/>
            <person name="Shiohata N."/>
            <person name="Sano S."/>
            <person name="Moriya S."/>
            <person name="Momiyama H."/>
            <person name="Satoh N."/>
            <person name="Takami S."/>
            <person name="Terashima Y."/>
            <person name="Suzuki O."/>
            <person name="Nakagawa S."/>
            <person name="Senoh A."/>
            <person name="Mizoguchi H."/>
            <person name="Goto Y."/>
            <person name="Shimizu F."/>
            <person name="Wakebe H."/>
            <person name="Hishigaki H."/>
            <person name="Watanabe T."/>
            <person name="Sugiyama A."/>
            <person name="Takemoto M."/>
            <person name="Kawakami B."/>
            <person name="Yamazaki M."/>
            <person name="Watanabe K."/>
            <person name="Kumagai A."/>
            <person name="Itakura S."/>
            <person name="Fukuzumi Y."/>
            <person name="Fujimori Y."/>
            <person name="Komiyama M."/>
            <person name="Tashiro H."/>
            <person name="Tanigami A."/>
            <person name="Fujiwara T."/>
            <person name="Ono T."/>
            <person name="Yamada K."/>
            <person name="Fujii Y."/>
            <person name="Ozaki K."/>
            <person name="Hirao M."/>
            <person name="Ohmori Y."/>
            <person name="Kawabata A."/>
            <person name="Hikiji T."/>
            <person name="Kobatake N."/>
            <person name="Inagaki H."/>
            <person name="Ikema Y."/>
            <person name="Okamoto S."/>
            <person name="Okitani R."/>
            <person name="Kawakami T."/>
            <person name="Noguchi S."/>
            <person name="Itoh T."/>
            <person name="Shigeta K."/>
            <person name="Senba T."/>
            <person name="Matsumura K."/>
            <person name="Nakajima Y."/>
            <person name="Mizuno T."/>
            <person name="Morinaga M."/>
            <person name="Sasaki M."/>
            <person name="Togashi T."/>
            <person name="Oyama M."/>
            <person name="Hata H."/>
            <person name="Watanabe M."/>
            <person name="Komatsu T."/>
            <person name="Mizushima-Sugano J."/>
            <person name="Satoh T."/>
            <person name="Shirai Y."/>
            <person name="Takahashi Y."/>
            <person name="Nakagawa K."/>
            <person name="Okumura K."/>
            <person name="Nagase T."/>
            <person name="Nomura N."/>
            <person name="Kikuchi H."/>
            <person name="Masuho Y."/>
            <person name="Yamashita R."/>
            <person name="Nakai K."/>
            <person name="Yada T."/>
            <person name="Nakamura Y."/>
            <person name="Ohara O."/>
            <person name="Isogai T."/>
            <person name="Sugano S."/>
        </authorList>
    </citation>
    <scope>NUCLEOTIDE SEQUENCE [LARGE SCALE MRNA] (ISOFORM 1)</scope>
    <scope>VARIANT ASN-46</scope>
    <source>
        <tissue>Heart</tissue>
        <tissue>Teratocarcinoma</tissue>
    </source>
</reference>
<reference key="3">
    <citation type="submission" date="2004-06" db="EMBL/GenBank/DDBJ databases">
        <title>Cloning of human full open reading frames in Gateway(TM) system entry vector (pDONR201).</title>
        <authorList>
            <person name="Ebert L."/>
            <person name="Schick M."/>
            <person name="Neubert P."/>
            <person name="Schatten R."/>
            <person name="Henze S."/>
            <person name="Korn B."/>
        </authorList>
    </citation>
    <scope>NUCLEOTIDE SEQUENCE [LARGE SCALE MRNA] (ISOFORM 1)</scope>
</reference>
<reference key="4">
    <citation type="journal article" date="2004" name="Nature">
        <title>The DNA sequence and biology of human chromosome 19.</title>
        <authorList>
            <person name="Grimwood J."/>
            <person name="Gordon L.A."/>
            <person name="Olsen A.S."/>
            <person name="Terry A."/>
            <person name="Schmutz J."/>
            <person name="Lamerdin J.E."/>
            <person name="Hellsten U."/>
            <person name="Goodstein D."/>
            <person name="Couronne O."/>
            <person name="Tran-Gyamfi M."/>
            <person name="Aerts A."/>
            <person name="Altherr M."/>
            <person name="Ashworth L."/>
            <person name="Bajorek E."/>
            <person name="Black S."/>
            <person name="Branscomb E."/>
            <person name="Caenepeel S."/>
            <person name="Carrano A.V."/>
            <person name="Caoile C."/>
            <person name="Chan Y.M."/>
            <person name="Christensen M."/>
            <person name="Cleland C.A."/>
            <person name="Copeland A."/>
            <person name="Dalin E."/>
            <person name="Dehal P."/>
            <person name="Denys M."/>
            <person name="Detter J.C."/>
            <person name="Escobar J."/>
            <person name="Flowers D."/>
            <person name="Fotopulos D."/>
            <person name="Garcia C."/>
            <person name="Georgescu A.M."/>
            <person name="Glavina T."/>
            <person name="Gomez M."/>
            <person name="Gonzales E."/>
            <person name="Groza M."/>
            <person name="Hammon N."/>
            <person name="Hawkins T."/>
            <person name="Haydu L."/>
            <person name="Ho I."/>
            <person name="Huang W."/>
            <person name="Israni S."/>
            <person name="Jett J."/>
            <person name="Kadner K."/>
            <person name="Kimball H."/>
            <person name="Kobayashi A."/>
            <person name="Larionov V."/>
            <person name="Leem S.-H."/>
            <person name="Lopez F."/>
            <person name="Lou Y."/>
            <person name="Lowry S."/>
            <person name="Malfatti S."/>
            <person name="Martinez D."/>
            <person name="McCready P.M."/>
            <person name="Medina C."/>
            <person name="Morgan J."/>
            <person name="Nelson K."/>
            <person name="Nolan M."/>
            <person name="Ovcharenko I."/>
            <person name="Pitluck S."/>
            <person name="Pollard M."/>
            <person name="Popkie A.P."/>
            <person name="Predki P."/>
            <person name="Quan G."/>
            <person name="Ramirez L."/>
            <person name="Rash S."/>
            <person name="Retterer J."/>
            <person name="Rodriguez A."/>
            <person name="Rogers S."/>
            <person name="Salamov A."/>
            <person name="Salazar A."/>
            <person name="She X."/>
            <person name="Smith D."/>
            <person name="Slezak T."/>
            <person name="Solovyev V."/>
            <person name="Thayer N."/>
            <person name="Tice H."/>
            <person name="Tsai M."/>
            <person name="Ustaszewska A."/>
            <person name="Vo N."/>
            <person name="Wagner M."/>
            <person name="Wheeler J."/>
            <person name="Wu K."/>
            <person name="Xie G."/>
            <person name="Yang J."/>
            <person name="Dubchak I."/>
            <person name="Furey T.S."/>
            <person name="DeJong P."/>
            <person name="Dickson M."/>
            <person name="Gordon D."/>
            <person name="Eichler E.E."/>
            <person name="Pennacchio L.A."/>
            <person name="Richardson P."/>
            <person name="Stubbs L."/>
            <person name="Rokhsar D.S."/>
            <person name="Myers R.M."/>
            <person name="Rubin E.M."/>
            <person name="Lucas S.M."/>
        </authorList>
    </citation>
    <scope>NUCLEOTIDE SEQUENCE [LARGE SCALE GENOMIC DNA]</scope>
</reference>
<reference key="5">
    <citation type="submission" date="2005-09" db="EMBL/GenBank/DDBJ databases">
        <authorList>
            <person name="Mural R.J."/>
            <person name="Istrail S."/>
            <person name="Sutton G.G."/>
            <person name="Florea L."/>
            <person name="Halpern A.L."/>
            <person name="Mobarry C.M."/>
            <person name="Lippert R."/>
            <person name="Walenz B."/>
            <person name="Shatkay H."/>
            <person name="Dew I."/>
            <person name="Miller J.R."/>
            <person name="Flanigan M.J."/>
            <person name="Edwards N.J."/>
            <person name="Bolanos R."/>
            <person name="Fasulo D."/>
            <person name="Halldorsson B.V."/>
            <person name="Hannenhalli S."/>
            <person name="Turner R."/>
            <person name="Yooseph S."/>
            <person name="Lu F."/>
            <person name="Nusskern D.R."/>
            <person name="Shue B.C."/>
            <person name="Zheng X.H."/>
            <person name="Zhong F."/>
            <person name="Delcher A.L."/>
            <person name="Huson D.H."/>
            <person name="Kravitz S.A."/>
            <person name="Mouchard L."/>
            <person name="Reinert K."/>
            <person name="Remington K.A."/>
            <person name="Clark A.G."/>
            <person name="Waterman M.S."/>
            <person name="Eichler E.E."/>
            <person name="Adams M.D."/>
            <person name="Hunkapiller M.W."/>
            <person name="Myers E.W."/>
            <person name="Venter J.C."/>
        </authorList>
    </citation>
    <scope>NUCLEOTIDE SEQUENCE [LARGE SCALE GENOMIC DNA]</scope>
    <scope>VARIANT ASN-46</scope>
</reference>
<reference key="6">
    <citation type="journal article" date="2004" name="Genome Res.">
        <title>The status, quality, and expansion of the NIH full-length cDNA project: the Mammalian Gene Collection (MGC).</title>
        <authorList>
            <consortium name="The MGC Project Team"/>
        </authorList>
    </citation>
    <scope>NUCLEOTIDE SEQUENCE [LARGE SCALE MRNA] (ISOFORMS 1 AND 2)</scope>
    <scope>VARIANT ASN-46</scope>
    <source>
        <tissue>Blood</tissue>
        <tissue>Eye</tissue>
        <tissue>Lung</tissue>
    </source>
</reference>
<reference key="7">
    <citation type="journal article" date="2005" name="Mol. Biol. Cell">
        <title>Evolutionarily conserved and nonconserved cellular localizations and functions of human SIRT proteins.</title>
        <authorList>
            <person name="Michishita E."/>
            <person name="Park J.Y."/>
            <person name="Burneskis J.M."/>
            <person name="Barrett J.C."/>
            <person name="Horikawa I."/>
        </authorList>
    </citation>
    <scope>SUBCELLULAR LOCATION</scope>
</reference>
<reference key="8">
    <citation type="journal article" date="2008" name="Nature">
        <title>SIRT6 is a histone H3 lysine 9 deacetylase that modulates telomeric chromatin.</title>
        <authorList>
            <person name="Michishita E."/>
            <person name="McCord R.A."/>
            <person name="Berber E."/>
            <person name="Kioi M."/>
            <person name="Padilla-Nash H."/>
            <person name="Damian M."/>
            <person name="Cheung P."/>
            <person name="Kusumoto R."/>
            <person name="Kawahara T.L.A."/>
            <person name="Barrett J.C."/>
            <person name="Chang H.Y."/>
            <person name="Bohr V.A."/>
            <person name="Ried T."/>
            <person name="Gozani O."/>
            <person name="Chua K.F."/>
        </authorList>
    </citation>
    <scope>FUNCTION</scope>
    <scope>CATALYTIC ACTIVITY</scope>
    <scope>ACTIVE SITE</scope>
    <scope>MUTAGENESIS OF HIS-133</scope>
    <scope>SUBCELLULAR LOCATION</scope>
</reference>
<reference key="9">
    <citation type="journal article" date="2008" name="Proc. Natl. Acad. Sci. U.S.A.">
        <title>A quantitative atlas of mitotic phosphorylation.</title>
        <authorList>
            <person name="Dephoure N."/>
            <person name="Zhou C."/>
            <person name="Villen J."/>
            <person name="Beausoleil S.A."/>
            <person name="Bakalarski C.E."/>
            <person name="Elledge S.J."/>
            <person name="Gygi S.P."/>
        </authorList>
    </citation>
    <scope>PHOSPHORYLATION [LARGE SCALE ANALYSIS] AT SER-303</scope>
    <scope>IDENTIFICATION BY MASS SPECTROMETRY [LARGE SCALE ANALYSIS]</scope>
    <source>
        <tissue>Cervix carcinoma</tissue>
    </source>
</reference>
<reference key="10">
    <citation type="journal article" date="2009" name="Anal. Chem.">
        <title>Lys-N and trypsin cover complementary parts of the phosphoproteome in a refined SCX-based approach.</title>
        <authorList>
            <person name="Gauci S."/>
            <person name="Helbig A.O."/>
            <person name="Slijper M."/>
            <person name="Krijgsveld J."/>
            <person name="Heck A.J."/>
            <person name="Mohammed S."/>
        </authorList>
    </citation>
    <scope>ACETYLATION [LARGE SCALE ANALYSIS] AT SER-2</scope>
    <scope>CLEAVAGE OF INITIATOR METHIONINE [LARGE SCALE ANALYSIS]</scope>
    <scope>IDENTIFICATION BY MASS SPECTROMETRY [LARGE SCALE ANALYSIS]</scope>
</reference>
<reference key="11">
    <citation type="journal article" date="2009" name="Cell">
        <title>SIRT6 links histone H3 lysine 9 deacetylation to NF-kappaB-dependent gene expression and organismal life span.</title>
        <authorList>
            <person name="Kawahara T.L.A."/>
            <person name="Michishita E."/>
            <person name="Adler A.S."/>
            <person name="Damian M."/>
            <person name="Berber E."/>
            <person name="Lin M."/>
            <person name="McCord R.A."/>
            <person name="Ongaigui K.C.L."/>
            <person name="Boxer L.D."/>
            <person name="Chang H.Y."/>
            <person name="Chua K.F."/>
        </authorList>
    </citation>
    <scope>FUNCTION</scope>
    <scope>INTERACTION WITH RELA</scope>
    <scope>SUBCELLULAR LOCATION</scope>
</reference>
<reference key="12">
    <citation type="journal article" date="2009" name="Cell Cycle">
        <title>Cell cycle-dependent deacetylation of telomeric histone H3 lysine K56 by human SIRT6.</title>
        <authorList>
            <person name="Michishita E."/>
            <person name="McCord R.A."/>
            <person name="Boxer L.D."/>
            <person name="Barber M.F."/>
            <person name="Hong T."/>
            <person name="Gozani O."/>
            <person name="Chua K.F."/>
        </authorList>
    </citation>
    <scope>FUNCTION</scope>
</reference>
<reference key="13">
    <citation type="journal article" date="2010" name="Science">
        <title>Human SIRT6 promotes DNA end resection through CtIP deacetylation.</title>
        <authorList>
            <person name="Kaidi A."/>
            <person name="Weinert B.T."/>
            <person name="Choudhary C."/>
            <person name="Jackson S.P."/>
        </authorList>
    </citation>
    <scope>RETRACTED PAPER</scope>
</reference>
<reference key="14">
    <citation type="journal article" date="2019" name="Science">
        <authorList>
            <person name="Kaidi A."/>
            <person name="Weinert B.T."/>
            <person name="Choudhary C."/>
            <person name="Jackson S.P."/>
        </authorList>
    </citation>
    <scope>RETRACTION NOTICE OF PUBMED:20829486</scope>
</reference>
<reference key="15">
    <citation type="journal article" date="2011" name="Nat. Commun.">
        <title>SIRT6 is required for maintenance of telomere position effect in human cells.</title>
        <authorList>
            <person name="Tennen R.I."/>
            <person name="Bua D.J."/>
            <person name="Wright W.E."/>
            <person name="Chua K.F."/>
        </authorList>
    </citation>
    <scope>FUNCTION</scope>
</reference>
<reference key="16">
    <citation type="journal article" date="2011" name="Science">
        <title>SIRT6 promotes DNA repair under stress by activating PARP1.</title>
        <authorList>
            <person name="Mao Z."/>
            <person name="Hine C."/>
            <person name="Tian X."/>
            <person name="Van Meter M."/>
            <person name="Au M."/>
            <person name="Vaidya A."/>
            <person name="Seluanov A."/>
            <person name="Gorbunova V."/>
        </authorList>
    </citation>
    <scope>FUNCTION</scope>
    <scope>CATALYTIC ACTIVITY</scope>
    <scope>SUBCELLULAR LOCATION</scope>
    <scope>MUTAGENESIS OF SER-56; GLY-60 AND ARG-65</scope>
</reference>
<reference key="17">
    <citation type="journal article" date="2011" name="Sci. Signal.">
        <title>System-wide temporal characterization of the proteome and phosphoproteome of human embryonic stem cell differentiation.</title>
        <authorList>
            <person name="Rigbolt K.T."/>
            <person name="Prokhorova T.A."/>
            <person name="Akimov V."/>
            <person name="Henningsen J."/>
            <person name="Johansen P.T."/>
            <person name="Kratchmarova I."/>
            <person name="Kassem M."/>
            <person name="Mann M."/>
            <person name="Olsen J.V."/>
            <person name="Blagoev B."/>
        </authorList>
    </citation>
    <scope>IDENTIFICATION BY MASS SPECTROMETRY [LARGE SCALE ANALYSIS]</scope>
</reference>
<reference key="18">
    <citation type="journal article" date="2012" name="Cell">
        <title>The histone deacetylase SIRT6 is a tumor suppressor that controls cancer metabolism.</title>
        <authorList>
            <person name="Sebastian C."/>
            <person name="Zwaans B.M."/>
            <person name="Silberman D.M."/>
            <person name="Gymrek M."/>
            <person name="Goren A."/>
            <person name="Zhong L."/>
            <person name="Ram O."/>
            <person name="Truelove J."/>
            <person name="Guimaraes A.R."/>
            <person name="Toiber D."/>
            <person name="Cosentino C."/>
            <person name="Greenson J.K."/>
            <person name="MacDonald A.I."/>
            <person name="McGlynn L."/>
            <person name="Maxwell F."/>
            <person name="Edwards J."/>
            <person name="Giacosa S."/>
            <person name="Guccione E."/>
            <person name="Weissleder R."/>
            <person name="Bernstein B.E."/>
            <person name="Regev A."/>
            <person name="Shiels P.G."/>
            <person name="Lombard D.B."/>
            <person name="Mostoslavsky R."/>
        </authorList>
    </citation>
    <scope>FUNCTION</scope>
    <scope>INDUCTION</scope>
</reference>
<reference key="19">
    <citation type="journal article" date="2012" name="Mol. Cell">
        <title>The deacetylase Sirt6 activates the acetyltransferase GCN5 and suppresses hepatic gluconeogenesis.</title>
        <authorList>
            <person name="Dominy J.E. Jr."/>
            <person name="Lee Y."/>
            <person name="Jedrychowski M.P."/>
            <person name="Chim H."/>
            <person name="Jurczak M.J."/>
            <person name="Camporez J.P."/>
            <person name="Ruan H.B."/>
            <person name="Feldman J."/>
            <person name="Pierce K."/>
            <person name="Mostoslavsky R."/>
            <person name="Denu J.M."/>
            <person name="Clish C.B."/>
            <person name="Yang X."/>
            <person name="Shulman G.I."/>
            <person name="Gygi S.P."/>
            <person name="Puigserver P."/>
        </authorList>
    </citation>
    <scope>FUNCTION</scope>
    <scope>CATALYTIC ACTIVITY</scope>
    <scope>MUTAGENESIS OF TYR-133</scope>
</reference>
<reference key="20">
    <citation type="journal article" date="2012" name="Proc. Natl. Acad. Sci. U.S.A.">
        <title>Sirtuin 6 (SIRT6) rescues the decline of homologous recombination repair during replicative senescence.</title>
        <authorList>
            <person name="Mao Z."/>
            <person name="Tian X."/>
            <person name="Van Meter M."/>
            <person name="Ke Z."/>
            <person name="Gorbunova V."/>
            <person name="Seluanov A."/>
        </authorList>
    </citation>
    <scope>FUNCTION</scope>
    <scope>MUTAGENESIS OF SER-56; GLY-60 AND ARG-65</scope>
</reference>
<reference key="21">
    <citation type="journal article" date="2013" name="Cell Rep.">
        <title>Multiple regulatory layers of SREBP1/2 by SIRT6.</title>
        <authorList>
            <person name="Elhanati S."/>
            <person name="Kanfi Y."/>
            <person name="Varvak A."/>
            <person name="Roichman A."/>
            <person name="Carmel-Gross I."/>
            <person name="Barth S."/>
            <person name="Gibor G."/>
            <person name="Cohen H.Y."/>
        </authorList>
    </citation>
    <scope>FUNCTION</scope>
</reference>
<reference key="22">
    <citation type="journal article" date="2013" name="J. Biol. Chem.">
        <title>The role of SIRT6 protein in aging and reprogramming of human induced pluripotent stem cells.</title>
        <authorList>
            <person name="Sharma A."/>
            <person name="Diecke S."/>
            <person name="Zhang W.Y."/>
            <person name="Lan F."/>
            <person name="He C."/>
            <person name="Mordwinkin N.M."/>
            <person name="Chua K.F."/>
            <person name="Wu J.C."/>
        </authorList>
    </citation>
    <scope>FUNCTION</scope>
</reference>
<reference key="23">
    <citation type="journal article" date="2013" name="J. Biol. Chem.">
        <title>Activation of the protein deacetylase SIRT6 by long-chain fatty acids and widespread deacylation by mammalian sirtuins.</title>
        <authorList>
            <person name="Feldman J.L."/>
            <person name="Baeza J."/>
            <person name="Denu J.M."/>
        </authorList>
    </citation>
    <scope>FUNCTION</scope>
    <scope>CATALYTIC ACTIVITY</scope>
    <scope>ACTIVITY REGULATION</scope>
</reference>
<reference key="24">
    <citation type="journal article" date="2013" name="J. Proteome Res.">
        <title>Toward a comprehensive characterization of a human cancer cell phosphoproteome.</title>
        <authorList>
            <person name="Zhou H."/>
            <person name="Di Palma S."/>
            <person name="Preisinger C."/>
            <person name="Peng M."/>
            <person name="Polat A.N."/>
            <person name="Heck A.J."/>
            <person name="Mohammed S."/>
        </authorList>
    </citation>
    <scope>PHOSPHORYLATION [LARGE SCALE ANALYSIS] AT SER-10; SER-303 AND SER-330</scope>
    <scope>IDENTIFICATION BY MASS SPECTROMETRY [LARGE SCALE ANALYSIS]</scope>
    <source>
        <tissue>Cervix carcinoma</tissue>
        <tissue>Erythroleukemia</tissue>
    </source>
</reference>
<reference key="25">
    <citation type="journal article" date="2013" name="Mol. Cell">
        <title>SIRT6 recruits SNF2H to DNA break sites, preventing genomic instability through chromatin remodeling.</title>
        <authorList>
            <person name="Toiber D."/>
            <person name="Erdel F."/>
            <person name="Bouazoune K."/>
            <person name="Silberman D.M."/>
            <person name="Zhong L."/>
            <person name="Mulligan P."/>
            <person name="Sebastian C."/>
            <person name="Cosentino C."/>
            <person name="Martinez-Pastor B."/>
            <person name="Giacosa S."/>
            <person name="D'Urso A."/>
            <person name="Naeaer A.M."/>
            <person name="Kingston R."/>
            <person name="Rippe K."/>
            <person name="Mostoslavsky R."/>
        </authorList>
    </citation>
    <scope>FUNCTION</scope>
    <scope>SUBCELLULAR LOCATION</scope>
    <scope>INTERACTION WITH SMARCA5</scope>
    <scope>MUTAGENESIS OF HIS-133</scope>
</reference>
<reference key="26">
    <citation type="journal article" date="2013" name="Mol. Cell. Biol.">
        <title>The ubiquitin ligase CHIP prevents SirT6 degradation through noncanonical ubiquitination.</title>
        <authorList>
            <person name="Ronnebaum S.M."/>
            <person name="Wu Y."/>
            <person name="McDonough H."/>
            <person name="Patterson C."/>
        </authorList>
    </citation>
    <scope>UBIQUITINATION AT LYS-170</scope>
    <scope>MUTAGENESIS OF LYS-170</scope>
</reference>
<reference key="27">
    <citation type="journal article" date="2013" name="Nucleic Acids Res.">
        <title>SIRT6 exhibits nucleosome-dependent deacetylase activity.</title>
        <authorList>
            <person name="Gil R."/>
            <person name="Barth S."/>
            <person name="Kanfi Y."/>
            <person name="Cohen H.Y."/>
        </authorList>
    </citation>
    <scope>FUNCTION</scope>
    <scope>CATALYTIC ACTIVITY</scope>
    <scope>ACTIVITY REGULATION</scope>
    <scope>ACTIVE SITE</scope>
    <scope>MUTAGENESIS OF HIS-133</scope>
</reference>
<reference key="28">
    <citation type="journal article" date="2014" name="J. Proteomics">
        <title>An enzyme assisted RP-RPLC approach for in-depth analysis of human liver phosphoproteome.</title>
        <authorList>
            <person name="Bian Y."/>
            <person name="Song C."/>
            <person name="Cheng K."/>
            <person name="Dong M."/>
            <person name="Wang F."/>
            <person name="Huang J."/>
            <person name="Sun D."/>
            <person name="Wang L."/>
            <person name="Ye M."/>
            <person name="Zou H."/>
        </authorList>
    </citation>
    <scope>PHOSPHORYLATION [LARGE SCALE ANALYSIS] AT THR-294</scope>
    <scope>IDENTIFICATION BY MASS SPECTROMETRY [LARGE SCALE ANALYSIS]</scope>
    <source>
        <tissue>Liver</tissue>
    </source>
</reference>
<reference key="29">
    <citation type="journal article" date="2014" name="PLoS ONE">
        <title>SIRT6 minor allele genotype is associated with &gt;5-year decrease in lifespan in an aged cohort.</title>
        <authorList>
            <person name="TenNapel M.J."/>
            <person name="Lynch C.F."/>
            <person name="Burns T.L."/>
            <person name="Wallace R."/>
            <person name="Smith B.J."/>
            <person name="Button A."/>
            <person name="Domann F.E."/>
        </authorList>
    </citation>
    <scope>POLYMORPHISM</scope>
</reference>
<reference key="30">
    <citation type="journal article" date="2014" name="Proc. Natl. Acad. Sci. U.S.A.">
        <title>Tumor suppressor p53 cooperates with SIRT6 to regulate gluconeogenesis by promoting FoxO1 nuclear exclusion.</title>
        <authorList>
            <person name="Zhang P."/>
            <person name="Tu B."/>
            <person name="Wang H."/>
            <person name="Cao Z."/>
            <person name="Tang M."/>
            <person name="Zhang C."/>
            <person name="Gu B."/>
            <person name="Li Z."/>
            <person name="Wang L."/>
            <person name="Yang Y."/>
            <person name="Zhao Y."/>
            <person name="Wang H."/>
            <person name="Luo J."/>
            <person name="Deng C.X."/>
            <person name="Gao B."/>
            <person name="Roeder R.G."/>
            <person name="Zhu W.G."/>
        </authorList>
    </citation>
    <scope>FUNCTION</scope>
    <scope>CATALYTIC ACTIVITY</scope>
</reference>
<reference key="31">
    <citation type="journal article" date="2015" name="Nat. Cell Biol.">
        <title>The histone deacetylase SIRT6 controls embryonic stem cell fate via TET-mediated production of 5-hydroxymethylcytosine.</title>
        <authorList>
            <person name="Etchegaray J.P."/>
            <person name="Chavez L."/>
            <person name="Huang Y."/>
            <person name="Ross K.N."/>
            <person name="Choi J."/>
            <person name="Martinez-Pastor B."/>
            <person name="Walsh R.M."/>
            <person name="Sommer C.A."/>
            <person name="Lienhard M."/>
            <person name="Gladden A."/>
            <person name="Kugel S."/>
            <person name="Silberman D.M."/>
            <person name="Ramaswamy S."/>
            <person name="Mostoslavsky G."/>
            <person name="Hochedlinger K."/>
            <person name="Goren A."/>
            <person name="Rao A."/>
            <person name="Mostoslavsky R."/>
        </authorList>
    </citation>
    <scope>FUNCTION</scope>
</reference>
<reference key="32">
    <citation type="journal article" date="2016" name="Cell Rep.">
        <title>Reciprocal regulation between SIRT6 and miR-122 controls liver metabolism and predicts hepatocarcinoma prognosis.</title>
        <authorList>
            <person name="Elhanati S."/>
            <person name="Ben-Hamo R."/>
            <person name="Kanfi Y."/>
            <person name="Varvak A."/>
            <person name="Glazz R."/>
            <person name="Lerrer B."/>
            <person name="Efroni S."/>
            <person name="Cohen H.Y."/>
        </authorList>
    </citation>
    <scope>INDUCTION</scope>
</reference>
<reference key="33">
    <citation type="journal article" date="2016" name="Cell Rep.">
        <title>JNK phosphorylates SIRT6 to stimulate DNA double-strand break repair in response to oxidative stress by recruiting PARP1 to DNA Breaks.</title>
        <authorList>
            <person name="Van Meter M."/>
            <person name="Simon M."/>
            <person name="Tombline G."/>
            <person name="May A."/>
            <person name="Morello T.D."/>
            <person name="Hubbard B.P."/>
            <person name="Bredbenner K."/>
            <person name="Park R."/>
            <person name="Sinclair D.A."/>
            <person name="Bohr V.A."/>
            <person name="Gorbunova V."/>
            <person name="Seluanov A."/>
        </authorList>
    </citation>
    <scope>FUNCTION</scope>
    <scope>CATALYTIC ACTIVITY</scope>
    <scope>SUBCELLULAR LOCATION</scope>
    <scope>PHOSPHORYLATION AT SER-10</scope>
    <scope>MUTAGENESIS OF SER-10; THR-294; SER-303; SER-330 AND SER-338</scope>
</reference>
<reference key="34">
    <citation type="journal article" date="2016" name="Mol. Cell">
        <title>LncPRESS1 is a p53-regulated lncRNA that safeguards pluripotency by disrupting SIRT6-mediated de-acetylation of histone H3K56.</title>
        <authorList>
            <person name="Jain A.K."/>
            <person name="Xi Y."/>
            <person name="McCarthy R."/>
            <person name="Allton K."/>
            <person name="Akdemir K.C."/>
            <person name="Patel L.R."/>
            <person name="Aronow B."/>
            <person name="Lin C."/>
            <person name="Li W."/>
            <person name="Yang L."/>
            <person name="Barton M.C."/>
        </authorList>
    </citation>
    <scope>CATALYTIC ACTIVITY</scope>
    <scope>ACTIVITY REGULATION</scope>
    <scope>SUBCELLULAR LOCATION</scope>
    <scope>RNA-BINDING</scope>
</reference>
<reference key="35">
    <citation type="journal article" date="2016" name="Nat. Chem. Biol.">
        <title>Identifying the functional contribution of the defatty-acylase activity of SIRT6.</title>
        <authorList>
            <person name="Zhang X."/>
            <person name="Khan S."/>
            <person name="Jiang H."/>
            <person name="Antonyak M.A."/>
            <person name="Chen X."/>
            <person name="Spiegelman N.A."/>
            <person name="Shrimp J.H."/>
            <person name="Cerione R.A."/>
            <person name="Lin H."/>
        </authorList>
    </citation>
    <scope>FUNCTION</scope>
    <scope>CATALYTIC ACTIVITY</scope>
    <scope>ACTIVE SITE</scope>
    <scope>MUTAGENESIS OF SER-56; GLY-60; ARG-65 AND HIS-133</scope>
</reference>
<reference key="36">
    <citation type="journal article" date="2016" name="Nat. Struct. Mol. Biol.">
        <title>SIRT6 deacetylates H3K18ac at pericentric chromatin to prevent mitotic errors and cellular senescence.</title>
        <authorList>
            <person name="Tasselli L."/>
            <person name="Xi Y."/>
            <person name="Zheng W."/>
            <person name="Tennen R.I."/>
            <person name="Odrowaz Z."/>
            <person name="Simeoni F."/>
            <person name="Li W."/>
            <person name="Chua K.F."/>
        </authorList>
    </citation>
    <scope>FUNCTION</scope>
    <scope>CATALYTIC ACTIVITY</scope>
    <scope>ACTIVITY REGULATION</scope>
    <scope>SUBCELLULAR LOCATION</scope>
    <scope>MUTAGENESIS OF HIS-133</scope>
</reference>
<reference key="37">
    <citation type="journal article" date="2016" name="Oncogene">
        <title>A crucial role of SUMOylation in modulating Sirt6 deacetylation of H3 at lysine 56 and its tumor suppressive activity.</title>
        <authorList>
            <person name="Cai J."/>
            <person name="Zuo Y."/>
            <person name="Wang T."/>
            <person name="Cao Y."/>
            <person name="Cai R."/>
            <person name="Chen F.L."/>
            <person name="Cheng J."/>
            <person name="Mu J."/>
        </authorList>
    </citation>
    <scope>FUNCTION</scope>
    <scope>SUBCELLULAR LOCATION</scope>
    <scope>SUMOYLATION</scope>
    <scope>MUTAGENESIS OF 296-LYS--LYS-300; LYS-316 AND LYS-332</scope>
</reference>
<reference key="38">
    <citation type="journal article" date="2016" name="Proc. Natl. Acad. Sci. U.S.A.">
        <title>SIRT6 deacetylates PKM2 to suppress its nuclear localization and oncogenic functions.</title>
        <authorList>
            <person name="Bhardwaj A."/>
            <person name="Das S."/>
        </authorList>
    </citation>
    <scope>FUNCTION</scope>
    <scope>CATALYTIC ACTIVITY</scope>
    <scope>MUTAGENESIS OF TYR-133</scope>
</reference>
<reference key="39">
    <citation type="journal article" date="2018" name="Elife">
        <title>Haploinsufficiency of Trp53 dramatically extends the lifespan of Sirt6-deficient mice.</title>
        <authorList>
            <person name="Ghosh S."/>
            <person name="Wong S.K."/>
            <person name="Jiang Z."/>
            <person name="Liu B."/>
            <person name="Wang Y."/>
            <person name="Hao Q."/>
            <person name="Gorbunova V."/>
            <person name="Liu X."/>
            <person name="Zhou Z."/>
        </authorList>
    </citation>
    <scope>FUNCTION</scope>
    <scope>CATALYTIC ACTIVITY</scope>
    <scope>MUTAGENESIS OF HIS-133</scope>
</reference>
<reference key="40">
    <citation type="journal article" date="2017" name="Elife">
        <title>SIRT6 regulates Ras-related protein R-Ras2 by lysine defatty-acylation.</title>
        <authorList>
            <person name="Zhang X."/>
            <person name="Spiegelman N.A."/>
            <person name="Nelson O.D."/>
            <person name="Jing H."/>
            <person name="Lin H."/>
        </authorList>
    </citation>
    <scope>FUNCTION</scope>
    <scope>ACTIVE SITE</scope>
    <scope>MUTAGENESIS OF GLY-60 AND HIS-133</scope>
</reference>
<reference key="41">
    <citation type="journal article" date="2016" name="Cell">
        <title>SIRT6 suppresses pancreatic cancer through control of Lin28b.</title>
        <authorList>
            <person name="Kugel S."/>
            <person name="Sebastian C."/>
            <person name="Fitamant J."/>
            <person name="Ross K.N."/>
            <person name="Saha S.K."/>
            <person name="Jain E."/>
            <person name="Gladden A."/>
            <person name="Arora K.S."/>
            <person name="Kato Y."/>
            <person name="Rivera M.N."/>
            <person name="Ramaswamy S."/>
            <person name="Sadreyev R.I."/>
            <person name="Goren A."/>
            <person name="Deshpande V."/>
            <person name="Bardeesy N."/>
            <person name="Mostoslavsky R."/>
        </authorList>
    </citation>
    <scope>FUNCTION</scope>
</reference>
<reference key="42">
    <citation type="journal article" date="2020" name="Elife">
        <title>SIRT6 is a DNA double-strand break sensor.</title>
        <authorList>
            <person name="Onn L."/>
            <person name="Portillo M."/>
            <person name="Ilic S."/>
            <person name="Cleitman G."/>
            <person name="Stein D."/>
            <person name="Kaluski S."/>
            <person name="Shirat I."/>
            <person name="Slobodnik Z."/>
            <person name="Einav M."/>
            <person name="Erdel F."/>
            <person name="Akabayov B."/>
            <person name="Toiber D."/>
        </authorList>
    </citation>
    <scope>FUNCTION</scope>
    <scope>SUBCELLULAR LOCATION</scope>
    <scope>SUBUNIT</scope>
    <scope>MUTAGENESIS OF ALA-13 AND HIS-133</scope>
    <scope>CHARACTERIZATION OF VARIANTS HIS-63 AND TYR-63</scope>
</reference>
<reference key="43">
    <citation type="journal article" date="2020" name="Elife">
        <title>Synergy between SIRT1 and SIRT6 helps recognize DNA breaks and potentiates the DNA damage response and repair in humans and mice.</title>
        <authorList>
            <person name="Meng F."/>
            <person name="Qian M."/>
            <person name="Peng B."/>
            <person name="Peng L."/>
            <person name="Wang X."/>
            <person name="Zheng K."/>
            <person name="Liu Z."/>
            <person name="Tang X."/>
            <person name="Zhang S."/>
            <person name="Sun S."/>
            <person name="Cao X."/>
            <person name="Pang Q."/>
            <person name="Zhao B."/>
            <person name="Ma W."/>
            <person name="Songyang Z."/>
            <person name="Xu B."/>
            <person name="Zhu W.G."/>
            <person name="Xu X."/>
            <person name="Liu B."/>
        </authorList>
    </citation>
    <scope>FUNCTION</scope>
    <scope>SUBCELLULAR LOCATION</scope>
    <scope>ACETYLATION AT LYS-33</scope>
    <scope>MUTAGENESIS OF LYS-15; LYS-17; LYS-33 AND HIS-133</scope>
</reference>
<reference key="44">
    <citation type="journal article" date="2020" name="J. Biol. Chem.">
        <title>Nitro-fatty acids as activators of hSIRT6 deacetylase activity.</title>
        <authorList>
            <person name="Carreno M."/>
            <person name="Bresque M."/>
            <person name="Machado M.R."/>
            <person name="Santos L."/>
            <person name="Duran R."/>
            <person name="Vitturi D.A."/>
            <person name="Escande C."/>
            <person name="Denicola A."/>
        </authorList>
    </citation>
    <scope>CATALYTIC ACTIVITY</scope>
    <scope>ACTIVITY REGULATION</scope>
</reference>
<reference key="45">
    <citation type="journal article" date="2020" name="Nat. Commun.">
        <title>Multivalent interactions drive nucleosome binding and efficient chromatin deacetylation by SIRT6.</title>
        <authorList>
            <person name="Liu W.H."/>
            <person name="Zheng J."/>
            <person name="Feldman J.L."/>
            <person name="Klein M.A."/>
            <person name="Kuznetsov V.I."/>
            <person name="Peterson C.L."/>
            <person name="Griffin P.R."/>
            <person name="Denu J.M."/>
        </authorList>
    </citation>
    <scope>FUNCTION</scope>
    <scope>CATALYTIC ACTIVITY</scope>
    <scope>ACTIVITY REGULATION</scope>
    <scope>DOMAIN</scope>
    <scope>DNA-BINDING</scope>
    <scope>MUTAGENESIS OF SER-45 AND 206-ASN--ASP-208</scope>
</reference>
<reference key="46">
    <citation type="journal article" date="2020" name="Nucleic Acids Res.">
        <title>The deacetylase SIRT6 promotes the repair of UV-induced DNA damage by targeting DDB2.</title>
        <authorList>
            <person name="Geng A."/>
            <person name="Tang H."/>
            <person name="Huang J."/>
            <person name="Qian Z."/>
            <person name="Qin N."/>
            <person name="Yao Y."/>
            <person name="Xu Z."/>
            <person name="Chen H."/>
            <person name="Lan L."/>
            <person name="Xie H."/>
            <person name="Zhang J."/>
            <person name="Jiang Y."/>
            <person name="Mao Z."/>
        </authorList>
    </citation>
    <scope>FUNCTION</scope>
    <scope>CATALYTIC ACTIVITY</scope>
    <scope>SUBCELLULAR LOCATION</scope>
    <scope>MUTAGENESIS OF SER-56 AND HIS-133</scope>
</reference>
<reference key="47">
    <citation type="journal article" date="2023" name="PLoS Pathog.">
        <title>Immune evasion strategy involving propionylation by the KSHV interferon regulatory factor 1 (vIRF1).</title>
        <authorList>
            <person name="Shi J."/>
            <person name="Jia X."/>
            <person name="He Y."/>
            <person name="Ma X."/>
            <person name="Qi X."/>
            <person name="Li W."/>
            <person name="Gao S.J."/>
            <person name="Yan Q."/>
            <person name="Lu C."/>
        </authorList>
    </citation>
    <scope>INTERACTION WITH KAPOSI'S SARCOMA-ASSOCIATED HERPESVIRUS PROTEIN VIRF-1 (MICROBIAL INFECTION)</scope>
    <scope>DEUBIQUITINATION BY USP10</scope>
</reference>
<reference evidence="64 65 66" key="48">
    <citation type="journal article" date="2011" name="J. Biol. Chem.">
        <title>Structure and biochemical functions of SIRT6.</title>
        <authorList>
            <person name="Pan P.W."/>
            <person name="Feldman J.L."/>
            <person name="Devries M.K."/>
            <person name="Dong A."/>
            <person name="Edwards A.M."/>
            <person name="Denu J.M."/>
        </authorList>
    </citation>
    <scope>X-RAY CRYSTALLOGRAPHY (2.00 ANGSTROMS) OF 2-318 IN COMPLEX WITH ZINC AND ADP-RIBOSE</scope>
    <scope>FUNCTION</scope>
    <scope>ACTIVITY REGULATION</scope>
</reference>
<reference evidence="67" key="49">
    <citation type="journal article" date="2013" name="Nature">
        <title>SIRT6 regulates TNF-alpha secretion through hydrolysis of long-chain fatty acyl lysine.</title>
        <authorList>
            <person name="Jiang H."/>
            <person name="Khan S."/>
            <person name="Wang Y."/>
            <person name="Charron G."/>
            <person name="He B."/>
            <person name="Sebastian C."/>
            <person name="Du J."/>
            <person name="Kim R."/>
            <person name="Ge E."/>
            <person name="Mostoslavsky R."/>
            <person name="Hang H.C."/>
            <person name="Hao Q."/>
            <person name="Lin H."/>
        </authorList>
    </citation>
    <scope>X-RAY CRYSTALLOGRAPHY (2.20 ANGSTROMS) OF 1-296 IN COMPLEX WITH ZINC</scope>
    <scope>FUNCTION</scope>
    <scope>CATALYTIC ACTIVITY</scope>
    <scope>BIOPHYSICOCHEMICAL PROPERTIES</scope>
    <scope>ACTIVITY REGULATION</scope>
    <scope>COFACTOR</scope>
    <scope>ACTIVE SITE</scope>
    <scope>SUBCELLULAR LOCATION</scope>
    <scope>MUTAGENESIS OF HIS-133</scope>
</reference>
<reference evidence="68 69 70 71" key="50">
    <citation type="journal article" date="2017" name="Angew. Chem. Int. Ed.">
        <title>Structural basis of sirtuin 6 activation by synthetic small molecules.</title>
        <authorList>
            <person name="You W."/>
            <person name="Rotili D."/>
            <person name="Li T.M."/>
            <person name="Kambach C."/>
            <person name="Meleshin M."/>
            <person name="Schutkowski M."/>
            <person name="Chua K.F."/>
            <person name="Mai A."/>
            <person name="Steegborn C."/>
        </authorList>
    </citation>
    <scope>X-RAY CRYSTALLOGRAPHY (1.87 ANGSTROMS) OF 13-308 IN COMPLEX WITH UBCS039 ACTIVATOR AND ZINC</scope>
    <scope>ACTIVITY REGULATION</scope>
</reference>
<reference evidence="74" key="51">
    <citation type="journal article" date="2018" name="J. Med. Chem.">
        <title>Structural basis of sirtuin 6 inhibition by the hydroxamate trichostatin A: implications for protein deacylase drug development.</title>
        <authorList>
            <person name="You W."/>
            <person name="Steegborn C."/>
        </authorList>
    </citation>
    <scope>X-RAY CRYSTALLOGRAPHY (1.70 ANGSTROMS) OF 13-308 IN COMPLEX WITH HYDROXAMATE TRICHOSTATIN A</scope>
    <scope>ACTIVITY REGULATION</scope>
</reference>
<reference evidence="72 73" key="52">
    <citation type="journal article" date="2018" name="Nat. Chem. Biol.">
        <title>Identification of a cellularly active SIRT6 allosteric activator.</title>
        <authorList>
            <person name="Huang Z."/>
            <person name="Zhao J."/>
            <person name="Deng W."/>
            <person name="Chen Y."/>
            <person name="Shang J."/>
            <person name="Song K."/>
            <person name="Zhang L."/>
            <person name="Wang C."/>
            <person name="Lu S."/>
            <person name="Yang X."/>
            <person name="He B."/>
            <person name="Min J."/>
            <person name="Hu H."/>
            <person name="Tan M."/>
            <person name="Xu J."/>
            <person name="Zhang Q."/>
            <person name="Zhong J."/>
            <person name="Sun X."/>
            <person name="Mao Z."/>
            <person name="Lin H."/>
            <person name="Xiao M."/>
            <person name="Chin Y.E."/>
            <person name="Jiang H."/>
            <person name="Xu Y."/>
            <person name="Chen G."/>
            <person name="Zhang J."/>
        </authorList>
    </citation>
    <scope>X-RAY CRYSTALLOGRAPHY (2.53 ANGSTROMS) OF 3-318 IN COMPLEX WITH COMPOUND MDL-801</scope>
    <scope>FUNCTION</scope>
    <scope>CATALYTIC ACTIVITY</scope>
    <scope>ACTIVITY REGULATION</scope>
    <scope>MUTAGENESIS OF PHE-82 AND PHE-86</scope>
</reference>
<reference evidence="75 76 77 78" key="53">
    <citation type="journal article" date="2019" name="Sci. Rep.">
        <title>Structural basis for the activation and inhibition of Sirtuin 6 by quercetin and its derivatives.</title>
        <authorList>
            <person name="You W."/>
            <person name="Zheng W."/>
            <person name="Weiss S."/>
            <person name="Chua K.F."/>
            <person name="Steegborn C."/>
        </authorList>
    </citation>
    <scope>X-RAY CRYSTALLOGRAPHY (1.84 ANGSTROMS) OF 13-308 IN COMPLEX WITH QUERCETIN-LIKE COMPOUNDS</scope>
    <scope>ACTIVITY REGULATION</scope>
</reference>
<reference evidence="83" key="54">
    <citation type="journal article" date="2020" name="ACS Med. Chem. Lett.">
        <title>Structural basis for activation of human sirtuin 6 by fluvastatin.</title>
        <authorList>
            <person name="You W."/>
            <person name="Steegborn C."/>
        </authorList>
    </citation>
    <scope>X-RAY CRYSTALLOGRAPHY (2.46 ANGSTROMS) OF 13-308 IN COMPLEX WITH FLUVASTATIN</scope>
    <scope>ACTIVITY REGULATION</scope>
</reference>
<reference evidence="79 80 81 82" key="55">
    <citation type="journal article" date="2021" name="Nat. Chem. Biol.">
        <title>Binding site for activator MDL-801 on SIRT6.</title>
        <authorList>
            <person name="You W."/>
            <person name="Steegborn C."/>
        </authorList>
    </citation>
    <scope>X-RAY CRYSTALLOGRAPHY (1.75 ANGSTROMS) OF 3-318 IN COMPLEX WITH COMPOUND MDL-801</scope>
    <scope>ACTIVITY REGULATION</scope>
</reference>
<reference evidence="84 85" key="56">
    <citation type="journal article" date="2021" name="Nat. Chem. Biol.">
        <title>Reply to: Binding site for MDL-801 on SIRT6.</title>
        <authorList>
            <person name="Huang Z."/>
            <person name="Zhao J."/>
            <person name="Deng W."/>
            <person name="Chen Y."/>
            <person name="Shang J."/>
            <person name="Song K."/>
            <person name="Zhang L."/>
            <person name="Wang C."/>
            <person name="Lu S."/>
            <person name="Yang X."/>
            <person name="He B."/>
            <person name="Min J."/>
            <person name="Hu H."/>
            <person name="Tan M."/>
            <person name="Xu J."/>
            <person name="Zhang Q."/>
            <person name="Zhong J."/>
            <person name="Sun X."/>
            <person name="Mao Z."/>
            <person name="Lin H."/>
            <person name="Xiao M."/>
            <person name="Chin Y.E."/>
            <person name="Jiang H."/>
            <person name="Shen H."/>
            <person name="Xu Y."/>
            <person name="Chen G."/>
            <person name="Zhang J."/>
        </authorList>
    </citation>
    <scope>X-RAY CRYSTALLOGRAPHY (2.53 ANGSTROMS) IN COMPLEX WITH COMPOUND MDL-801</scope>
    <scope>ACTIVITY REGULATION</scope>
</reference>
<reference key="57">
    <citation type="journal article" date="2015" name="Cell Rep.">
        <title>Identification of and molecular basis for SIRT6 loss-of-function point mutations in cancer.</title>
        <authorList>
            <person name="Kugel S."/>
            <person name="Feldman J.L."/>
            <person name="Klein M.A."/>
            <person name="Silberman D.M."/>
            <person name="Sebastian C."/>
            <person name="Mermel C."/>
            <person name="Dobersch S."/>
            <person name="Clark A.R."/>
            <person name="Getz G."/>
            <person name="Denu J.M."/>
            <person name="Mostoslavsky R."/>
        </authorList>
    </citation>
    <scope>VARIANTS ASN-25; VAL-36; ASN-46; TYR-63; SER-89; ASN-116; 260-GLU--SER-355 DEL; PRO-263 AND LEU-274</scope>
    <scope>FUNCTION</scope>
    <scope>CATALYTIC ACTIVITY</scope>
    <scope>SUBCELLULAR LOCATION</scope>
    <scope>CHARACTERIZATION OF VARIANTS ASN-25; VAL-36; ASN-46; TYR-63; SER-89; ASN-116; 260-GLU--SER-355 DEL; PRO-263 AND LEU-274</scope>
</reference>
<reference key="58">
    <citation type="journal article" date="2018" name="Genes Dev.">
        <title>An inactivating mutation in the histone deacetylase SIRT6 causes human perinatal lethality.</title>
        <authorList>
            <person name="Ferrer C.M."/>
            <person name="Alders M."/>
            <person name="Postma A.V."/>
            <person name="Park S."/>
            <person name="Klein M.A."/>
            <person name="Cetinbas M."/>
            <person name="Pajkrt E."/>
            <person name="Glas A."/>
            <person name="van Koningsbruggen S."/>
            <person name="Christoffels V.M."/>
            <person name="Mannens M.M.A.M."/>
            <person name="Knegt L."/>
            <person name="Etchegaray J.P."/>
            <person name="Sadreyev R.I."/>
            <person name="Denu J.M."/>
            <person name="Mostoslavsky G."/>
            <person name="van Maarle M.C."/>
            <person name="Mostoslavsky R."/>
        </authorList>
    </citation>
    <scope>VARIANT HIS-63</scope>
    <scope>CHARACTERIZATION OF VARIANT HIS-63</scope>
    <scope>FUNCTION</scope>
    <scope>SUBCELLULAR LOCATION</scope>
    <scope>CATALYTIC ACTIVITY</scope>
</reference>